<evidence type="ECO:0000255" key="1">
    <source>
        <dbReference type="PROSITE-ProRule" id="PRU00809"/>
    </source>
</evidence>
<evidence type="ECO:0000269" key="2">
    <source>
    </source>
</evidence>
<evidence type="ECO:0007744" key="3">
    <source>
    </source>
</evidence>
<evidence type="ECO:0007744" key="4">
    <source>
    </source>
</evidence>
<evidence type="ECO:0007829" key="5">
    <source>
        <dbReference type="PDB" id="1RYP"/>
    </source>
</evidence>
<evidence type="ECO:0007829" key="6">
    <source>
        <dbReference type="PDB" id="4NNN"/>
    </source>
</evidence>
<evidence type="ECO:0007829" key="7">
    <source>
        <dbReference type="PDB" id="8RVQ"/>
    </source>
</evidence>
<sequence length="205" mass="22605">MSDPSSINGGIVVAMTGKDCVAIACDLRLGSQSLGVSNKFEKIFHYGHVFLGITGLATDVTTLNEMFRYKTNLYKLKEERAIEPETFTQLVSSSLYERRFGPYFVGPVVAGINSKSGKPFIAGFDLIGCIDEAKDFIVSGTASDQLFGMCESLYEPNLEPEDLFETISQALLNAADRDALSGWGAVVYIIKKDEVVKRYLKMRQD</sequence>
<keyword id="KW-0002">3D-structure</keyword>
<keyword id="KW-0963">Cytoplasm</keyword>
<keyword id="KW-1017">Isopeptide bond</keyword>
<keyword id="KW-0539">Nucleus</keyword>
<keyword id="KW-0597">Phosphoprotein</keyword>
<keyword id="KW-0647">Proteasome</keyword>
<keyword id="KW-1185">Reference proteome</keyword>
<keyword id="KW-0832">Ubl conjugation</keyword>
<protein>
    <recommendedName>
        <fullName>Proteasome subunit beta type-3</fullName>
    </recommendedName>
    <alternativeName>
        <fullName>Macropain subunit PUP3</fullName>
    </alternativeName>
    <alternativeName>
        <fullName>Multicatalytic endopeptidase complex subunit PUP3</fullName>
    </alternativeName>
    <alternativeName>
        <fullName>Proteasome component PUP3</fullName>
    </alternativeName>
</protein>
<name>PSB3_YEAST</name>
<reference key="1">
    <citation type="journal article" date="1992" name="Mol. Cell. Biol.">
        <title>Nucleotide sequence and transcriptional regulation of the yeast recombinational repair gene RAD51.</title>
        <authorList>
            <person name="Basile G.M."/>
            <person name="Aker M."/>
            <person name="Mortimer R.K."/>
        </authorList>
    </citation>
    <scope>NUCLEOTIDE SEQUENCE [GENOMIC DNA]</scope>
</reference>
<reference key="2">
    <citation type="journal article" date="1997" name="Nature">
        <title>The nucleotide sequence of Saccharomyces cerevisiae chromosome V.</title>
        <authorList>
            <person name="Dietrich F.S."/>
            <person name="Mulligan J.T."/>
            <person name="Hennessy K.M."/>
            <person name="Yelton M.A."/>
            <person name="Allen E."/>
            <person name="Araujo R."/>
            <person name="Aviles E."/>
            <person name="Berno A."/>
            <person name="Brennan T."/>
            <person name="Carpenter J."/>
            <person name="Chen E."/>
            <person name="Cherry J.M."/>
            <person name="Chung E."/>
            <person name="Duncan M."/>
            <person name="Guzman E."/>
            <person name="Hartzell G."/>
            <person name="Hunicke-Smith S."/>
            <person name="Hyman R.W."/>
            <person name="Kayser A."/>
            <person name="Komp C."/>
            <person name="Lashkari D."/>
            <person name="Lew H."/>
            <person name="Lin D."/>
            <person name="Mosedale D."/>
            <person name="Nakahara K."/>
            <person name="Namath A."/>
            <person name="Norgren R."/>
            <person name="Oefner P."/>
            <person name="Oh C."/>
            <person name="Petel F.X."/>
            <person name="Roberts D."/>
            <person name="Sehl P."/>
            <person name="Schramm S."/>
            <person name="Shogren T."/>
            <person name="Smith V."/>
            <person name="Taylor P."/>
            <person name="Wei Y."/>
            <person name="Botstein D."/>
            <person name="Davis R.W."/>
        </authorList>
    </citation>
    <scope>NUCLEOTIDE SEQUENCE [LARGE SCALE GENOMIC DNA]</scope>
    <source>
        <strain>ATCC 204508 / S288c</strain>
    </source>
</reference>
<reference key="3">
    <citation type="journal article" date="2014" name="G3 (Bethesda)">
        <title>The reference genome sequence of Saccharomyces cerevisiae: Then and now.</title>
        <authorList>
            <person name="Engel S.R."/>
            <person name="Dietrich F.S."/>
            <person name="Fisk D.G."/>
            <person name="Binkley G."/>
            <person name="Balakrishnan R."/>
            <person name="Costanzo M.C."/>
            <person name="Dwight S.S."/>
            <person name="Hitz B.C."/>
            <person name="Karra K."/>
            <person name="Nash R.S."/>
            <person name="Weng S."/>
            <person name="Wong E.D."/>
            <person name="Lloyd P."/>
            <person name="Skrzypek M.S."/>
            <person name="Miyasato S.R."/>
            <person name="Simison M."/>
            <person name="Cherry J.M."/>
        </authorList>
    </citation>
    <scope>GENOME REANNOTATION</scope>
    <source>
        <strain>ATCC 204508 / S288c</strain>
    </source>
</reference>
<reference key="4">
    <citation type="journal article" date="2008" name="Mol. Cell. Proteomics">
        <title>A multidimensional chromatography technology for in-depth phosphoproteome analysis.</title>
        <authorList>
            <person name="Albuquerque C.P."/>
            <person name="Smolka M.B."/>
            <person name="Payne S.H."/>
            <person name="Bafna V."/>
            <person name="Eng J."/>
            <person name="Zhou H."/>
        </authorList>
    </citation>
    <scope>PHOSPHORYLATION [LARGE SCALE ANALYSIS] AT SER-31</scope>
    <scope>IDENTIFICATION BY MASS SPECTROMETRY [LARGE SCALE ANALYSIS]</scope>
</reference>
<reference key="5">
    <citation type="journal article" date="2012" name="Proteomics">
        <title>Sites of ubiquitin attachment in Saccharomyces cerevisiae.</title>
        <authorList>
            <person name="Starita L.M."/>
            <person name="Lo R.S."/>
            <person name="Eng J.K."/>
            <person name="von Haller P.D."/>
            <person name="Fields S."/>
        </authorList>
    </citation>
    <scope>UBIQUITINATION [LARGE SCALE ANALYSIS] AT LYS-70</scope>
    <scope>IDENTIFICATION BY MASS SPECTROMETRY [LARGE SCALE ANALYSIS]</scope>
</reference>
<reference key="6">
    <citation type="journal article" date="1997" name="Nature">
        <title>Structure of 20S proteasome from yeast at 2.4-A resolution.</title>
        <authorList>
            <person name="Groll M."/>
            <person name="Ditzel L."/>
            <person name="Loewe J."/>
            <person name="Stock D."/>
            <person name="Bochtler M."/>
            <person name="Bartunik H.D."/>
            <person name="Huber R."/>
        </authorList>
    </citation>
    <scope>X-RAY CRYSTALLOGRAPHY (1.9 ANGSTROMS) OF COMPLEX WITH THE 20S PROTEASOME</scope>
</reference>
<reference key="7">
    <citation type="journal article" date="2000" name="Nature">
        <title>Structural basis for the activation of 20S proteasomes by 11S regulators.</title>
        <authorList>
            <person name="Whitby F.G."/>
            <person name="Masters E.I."/>
            <person name="Kramer L."/>
            <person name="Knowlton J.R."/>
            <person name="Yao Y."/>
            <person name="Wang C.C."/>
            <person name="Hill C.P."/>
        </authorList>
    </citation>
    <scope>X-RAY CRYSTALLOGRAPHY (3.2 ANGSTROMS) OF COMPLEX WITH THE 20S PROTEASOME AND A 11S REGULATORY COMPLEX</scope>
</reference>
<reference key="8">
    <citation type="journal article" date="2000" name="Nat. Struct. Biol.">
        <title>A gated channel into the proteasome core particle.</title>
        <authorList>
            <person name="Groll M."/>
            <person name="Bajorek M."/>
            <person name="Koehler A."/>
            <person name="Moroder L."/>
            <person name="Rubin D.M."/>
            <person name="Huber R."/>
            <person name="Glickman M.H."/>
            <person name="Finley D."/>
        </authorList>
    </citation>
    <scope>X-RAY CRYSTALLOGRAPHY (2.4 ANGSTROMS) OF COMPLEX WITH THE 20S PROTEASOME</scope>
</reference>
<reference key="9">
    <citation type="journal article" date="2006" name="Chem. Biol.">
        <title>TMC-95-based inhibitor design provides evidence for the catalytic versatility of the proteasome.</title>
        <authorList>
            <person name="Groll M."/>
            <person name="Goetz M."/>
            <person name="Kaiser M."/>
            <person name="Weyher E."/>
            <person name="Moroder L."/>
        </authorList>
    </citation>
    <scope>X-RAY CRYSTALLOGRAPHY (2.81 ANGSTROMS) OF COMPLEX WITH THE 20S PROTEASOME AND A TMC-95-BASED INHIBITOR</scope>
</reference>
<reference key="10">
    <citation type="journal article" date="2006" name="J. Am. Chem. Soc.">
        <title>Crystal structures of salinosporamide A (NPI-0052) and B (NPI-0047) in complex with the 20S proteasome reveal important consequences of beta-lactone ring opening and a mechanism for irreversible binding.</title>
        <authorList>
            <person name="Groll M."/>
            <person name="Huber R."/>
            <person name="Potts B.C.M."/>
        </authorList>
    </citation>
    <scope>X-RAY CRYSTALLOGRAPHY (2.8 ANGSTROMS) OF COMPLEX WITH THE 20S PROTEASOME AND SALINOSPORAMIDE</scope>
</reference>
<reference key="11">
    <citation type="journal article" date="2006" name="Structure">
        <title>Crystal structure of the boronic acid-based proteasome inhibitor bortezomib in complex with the yeast 20S proteasome.</title>
        <authorList>
            <person name="Groll M."/>
            <person name="Berkers C.R."/>
            <person name="Ploegh H.L."/>
            <person name="Ovaa H."/>
        </authorList>
    </citation>
    <scope>X-RAY CRYSTALLOGRAPHY (2.8 ANGSTROMS) OF COMPLEX WITH THE 20S PROTEASOME AND BORTEZOMIB</scope>
</reference>
<reference key="12">
    <citation type="journal article" date="2010" name="Mol. Cell">
        <title>Structure of a Blm10 complex reveals common mechanisms for proteasome binding and gate opening.</title>
        <authorList>
            <person name="Sadre-Bazzaz K."/>
            <person name="Whitby F.G."/>
            <person name="Robinson H."/>
            <person name="Formosa T."/>
            <person name="Hill C.P."/>
        </authorList>
    </citation>
    <scope>X-RAY CRYSTALLOGRAPHY (3.0 ANGSTROMS) OF 2-205 IN COMPLEX WITH THE PROTEASOME</scope>
</reference>
<reference key="13">
    <citation type="journal article" date="2012" name="Proc. Natl. Acad. Sci. U.S.A.">
        <title>Near-atomic resolution structural model of the yeast 26S proteasome.</title>
        <authorList>
            <person name="Beck F."/>
            <person name="Unverdorben P."/>
            <person name="Bohn S."/>
            <person name="Schweitzer A."/>
            <person name="Pfeifer G."/>
            <person name="Sakata E."/>
            <person name="Nickell S."/>
            <person name="Plitzko J.M."/>
            <person name="Villa E."/>
            <person name="Baumeister W."/>
            <person name="Forster F."/>
        </authorList>
    </citation>
    <scope>STRUCTURE BY ELECTRON MICROSCOPY (7.4 ANGSTROMS) OF THE 26S PROTEASOME</scope>
</reference>
<feature type="chain" id="PRO_0000148070" description="Proteasome subunit beta type-3">
    <location>
        <begin position="1"/>
        <end position="205"/>
    </location>
</feature>
<feature type="modified residue" description="Phosphoserine" evidence="3">
    <location>
        <position position="31"/>
    </location>
</feature>
<feature type="cross-link" description="Glycyl lysine isopeptide (Lys-Gly) (interchain with G-Cter in ubiquitin)" evidence="4">
    <location>
        <position position="70"/>
    </location>
</feature>
<feature type="helix" evidence="5">
    <location>
        <begin position="4"/>
        <end position="6"/>
    </location>
</feature>
<feature type="strand" evidence="5">
    <location>
        <begin position="11"/>
        <end position="16"/>
    </location>
</feature>
<feature type="strand" evidence="5">
    <location>
        <begin position="18"/>
        <end position="26"/>
    </location>
</feature>
<feature type="strand" evidence="5">
    <location>
        <begin position="29"/>
        <end position="31"/>
    </location>
</feature>
<feature type="strand" evidence="5">
    <location>
        <begin position="34"/>
        <end position="38"/>
    </location>
</feature>
<feature type="strand" evidence="5">
    <location>
        <begin position="43"/>
        <end position="46"/>
    </location>
</feature>
<feature type="strand" evidence="5">
    <location>
        <begin position="49"/>
        <end position="55"/>
    </location>
</feature>
<feature type="helix" evidence="5">
    <location>
        <begin position="57"/>
        <end position="78"/>
    </location>
</feature>
<feature type="helix" evidence="5">
    <location>
        <begin position="84"/>
        <end position="96"/>
    </location>
</feature>
<feature type="turn" evidence="5">
    <location>
        <begin position="97"/>
        <end position="100"/>
    </location>
</feature>
<feature type="strand" evidence="5">
    <location>
        <begin position="105"/>
        <end position="112"/>
    </location>
</feature>
<feature type="turn" evidence="5">
    <location>
        <begin position="114"/>
        <end position="116"/>
    </location>
</feature>
<feature type="strand" evidence="5">
    <location>
        <begin position="119"/>
        <end position="124"/>
    </location>
</feature>
<feature type="strand" evidence="7">
    <location>
        <begin position="130"/>
        <end position="132"/>
    </location>
</feature>
<feature type="strand" evidence="5">
    <location>
        <begin position="134"/>
        <end position="140"/>
    </location>
</feature>
<feature type="helix" evidence="5">
    <location>
        <begin position="143"/>
        <end position="153"/>
    </location>
</feature>
<feature type="helix" evidence="5">
    <location>
        <begin position="160"/>
        <end position="175"/>
    </location>
</feature>
<feature type="strand" evidence="6">
    <location>
        <begin position="178"/>
        <end position="181"/>
    </location>
</feature>
<feature type="strand" evidence="5">
    <location>
        <begin position="185"/>
        <end position="193"/>
    </location>
</feature>
<feature type="strand" evidence="5">
    <location>
        <begin position="195"/>
        <end position="200"/>
    </location>
</feature>
<proteinExistence type="evidence at protein level"/>
<organism>
    <name type="scientific">Saccharomyces cerevisiae (strain ATCC 204508 / S288c)</name>
    <name type="common">Baker's yeast</name>
    <dbReference type="NCBI Taxonomy" id="559292"/>
    <lineage>
        <taxon>Eukaryota</taxon>
        <taxon>Fungi</taxon>
        <taxon>Dikarya</taxon>
        <taxon>Ascomycota</taxon>
        <taxon>Saccharomycotina</taxon>
        <taxon>Saccharomycetes</taxon>
        <taxon>Saccharomycetales</taxon>
        <taxon>Saccharomycetaceae</taxon>
        <taxon>Saccharomyces</taxon>
    </lineage>
</organism>
<comment type="function">
    <text>Non-catalytic component of the proteasome which degrades poly-ubiquitinated proteins in the cytoplasm and in the nucleus. It is essential for the regulated turnover of proteins and for the removal of misfolded proteins. The proteasome is a multicatalytic proteinase complex that is characterized by its ability to cleave peptides with Arg, Phe, Tyr, Leu, and Glu adjacent to the leaving group at neutral or slightly basic pH. It has an ATP-dependent proteolytic activity. This subunit may participate in the trypsin-like activity of the enzyme complex.</text>
</comment>
<comment type="subunit">
    <text evidence="2">The 26S proteasome consists of a 20S proteasome core and two 19S regulatory subunits. The 20S proteasome core is composed of 28 subunits that are arranged in four stacked rings, resulting in a barrel-shaped structure. The two end rings are each formed by seven alpha subunits, and the two central rings are each formed by seven beta subunits. The catalytic chamber with the active sites is on the inside of the barrel.</text>
</comment>
<comment type="interaction">
    <interactant intactId="EBI-13993">
        <id>P25451</id>
    </interactant>
    <interactant intactId="EBI-13988">
        <id>P22141</id>
        <label>PRE1</label>
    </interactant>
    <organismsDiffer>false</organismsDiffer>
    <experiments>4</experiments>
</comment>
<comment type="interaction">
    <interactant intactId="EBI-13993">
        <id>P25451</id>
    </interactant>
    <interactant intactId="EBI-14001">
        <id>P30656</id>
        <label>PRE2</label>
    </interactant>
    <organismsDiffer>false</organismsDiffer>
    <experiments>3</experiments>
</comment>
<comment type="interaction">
    <interactant intactId="EBI-13993">
        <id>P25451</id>
    </interactant>
    <interactant intactId="EBI-14009">
        <id>P25043</id>
        <label>PUP1</label>
    </interactant>
    <organismsDiffer>false</organismsDiffer>
    <experiments>3</experiments>
</comment>
<comment type="subcellular location">
    <subcellularLocation>
        <location>Cytoplasm</location>
    </subcellularLocation>
    <subcellularLocation>
        <location>Nucleus</location>
    </subcellularLocation>
</comment>
<comment type="similarity">
    <text evidence="1">Belongs to the peptidase T1B family.</text>
</comment>
<dbReference type="EMBL" id="M88470">
    <property type="protein sequence ID" value="AAA34946.1"/>
    <property type="molecule type" value="Genomic_DNA"/>
</dbReference>
<dbReference type="EMBL" id="U18839">
    <property type="protein sequence ID" value="AAB64649.1"/>
    <property type="molecule type" value="Genomic_DNA"/>
</dbReference>
<dbReference type="EMBL" id="BK006939">
    <property type="protein sequence ID" value="DAA07756.1"/>
    <property type="molecule type" value="Genomic_DNA"/>
</dbReference>
<dbReference type="PIR" id="S29251">
    <property type="entry name" value="S29251"/>
</dbReference>
<dbReference type="RefSeq" id="NP_011020.3">
    <property type="nucleotide sequence ID" value="NM_001178985.3"/>
</dbReference>
<dbReference type="PDB" id="1FNT">
    <property type="method" value="X-ray"/>
    <property type="resolution" value="3.20 A"/>
    <property type="chains" value="J/X=1-205"/>
</dbReference>
<dbReference type="PDB" id="1G0U">
    <property type="method" value="X-ray"/>
    <property type="resolution" value="2.40 A"/>
    <property type="chains" value="I/W=1-205"/>
</dbReference>
<dbReference type="PDB" id="1G65">
    <property type="method" value="X-ray"/>
    <property type="resolution" value="2.25 A"/>
    <property type="chains" value="I/W=2-205"/>
</dbReference>
<dbReference type="PDB" id="1JD2">
    <property type="method" value="X-ray"/>
    <property type="resolution" value="3.00 A"/>
    <property type="chains" value="I/P=2-205"/>
</dbReference>
<dbReference type="PDB" id="1RYP">
    <property type="method" value="X-ray"/>
    <property type="resolution" value="1.90 A"/>
    <property type="chains" value="J/X=2-205"/>
</dbReference>
<dbReference type="PDB" id="1Z7Q">
    <property type="method" value="X-ray"/>
    <property type="resolution" value="3.22 A"/>
    <property type="chains" value="J/X=1-205"/>
</dbReference>
<dbReference type="PDB" id="2F16">
    <property type="method" value="X-ray"/>
    <property type="resolution" value="2.80 A"/>
    <property type="chains" value="I/W=2-205"/>
</dbReference>
<dbReference type="PDB" id="2FAK">
    <property type="method" value="X-ray"/>
    <property type="resolution" value="2.80 A"/>
    <property type="chains" value="I/W=2-205"/>
</dbReference>
<dbReference type="PDB" id="2GPL">
    <property type="method" value="X-ray"/>
    <property type="resolution" value="2.81 A"/>
    <property type="chains" value="I/W=2-205"/>
</dbReference>
<dbReference type="PDB" id="2ZCY">
    <property type="method" value="X-ray"/>
    <property type="resolution" value="2.90 A"/>
    <property type="chains" value="I/W=1-205"/>
</dbReference>
<dbReference type="PDB" id="3BDM">
    <property type="method" value="X-ray"/>
    <property type="resolution" value="2.70 A"/>
    <property type="chains" value="I/W=1-205"/>
</dbReference>
<dbReference type="PDB" id="3D29">
    <property type="method" value="X-ray"/>
    <property type="resolution" value="2.60 A"/>
    <property type="chains" value="I/W=2-205"/>
</dbReference>
<dbReference type="PDB" id="3DY3">
    <property type="method" value="X-ray"/>
    <property type="resolution" value="2.81 A"/>
    <property type="chains" value="I/W=2-205"/>
</dbReference>
<dbReference type="PDB" id="3DY4">
    <property type="method" value="X-ray"/>
    <property type="resolution" value="2.80 A"/>
    <property type="chains" value="I/W=2-205"/>
</dbReference>
<dbReference type="PDB" id="3E47">
    <property type="method" value="X-ray"/>
    <property type="resolution" value="3.00 A"/>
    <property type="chains" value="I/W=2-205"/>
</dbReference>
<dbReference type="PDB" id="3GPJ">
    <property type="method" value="X-ray"/>
    <property type="resolution" value="2.70 A"/>
    <property type="chains" value="I/W=2-205"/>
</dbReference>
<dbReference type="PDB" id="3GPT">
    <property type="method" value="X-ray"/>
    <property type="resolution" value="2.41 A"/>
    <property type="chains" value="I/W=2-205"/>
</dbReference>
<dbReference type="PDB" id="3GPW">
    <property type="method" value="X-ray"/>
    <property type="resolution" value="2.50 A"/>
    <property type="chains" value="I/W=2-205"/>
</dbReference>
<dbReference type="PDB" id="3HYE">
    <property type="method" value="X-ray"/>
    <property type="resolution" value="2.50 A"/>
    <property type="chains" value="I/W=2-205"/>
</dbReference>
<dbReference type="PDB" id="3JCO">
    <property type="method" value="EM"/>
    <property type="resolution" value="4.80 A"/>
    <property type="chains" value="5/j=1-205"/>
</dbReference>
<dbReference type="PDB" id="3JCP">
    <property type="method" value="EM"/>
    <property type="resolution" value="4.60 A"/>
    <property type="chains" value="5/j=1-205"/>
</dbReference>
<dbReference type="PDB" id="3MG0">
    <property type="method" value="X-ray"/>
    <property type="resolution" value="2.68 A"/>
    <property type="chains" value="I/W=2-205"/>
</dbReference>
<dbReference type="PDB" id="3MG4">
    <property type="method" value="X-ray"/>
    <property type="resolution" value="3.11 A"/>
    <property type="chains" value="I/W=2-205"/>
</dbReference>
<dbReference type="PDB" id="3MG6">
    <property type="method" value="X-ray"/>
    <property type="resolution" value="2.60 A"/>
    <property type="chains" value="I/W=1-205"/>
</dbReference>
<dbReference type="PDB" id="3MG7">
    <property type="method" value="X-ray"/>
    <property type="resolution" value="2.78 A"/>
    <property type="chains" value="I/W=1-205"/>
</dbReference>
<dbReference type="PDB" id="3MG8">
    <property type="method" value="X-ray"/>
    <property type="resolution" value="2.59 A"/>
    <property type="chains" value="I/W=1-205"/>
</dbReference>
<dbReference type="PDB" id="3NZJ">
    <property type="method" value="X-ray"/>
    <property type="resolution" value="2.40 A"/>
    <property type="chains" value="I/W=1-205"/>
</dbReference>
<dbReference type="PDB" id="3NZW">
    <property type="method" value="X-ray"/>
    <property type="resolution" value="2.50 A"/>
    <property type="chains" value="I/W=1-205"/>
</dbReference>
<dbReference type="PDB" id="3NZX">
    <property type="method" value="X-ray"/>
    <property type="resolution" value="2.70 A"/>
    <property type="chains" value="I/W=1-205"/>
</dbReference>
<dbReference type="PDB" id="3OEU">
    <property type="method" value="X-ray"/>
    <property type="resolution" value="2.60 A"/>
    <property type="chains" value="I/W=2-205"/>
</dbReference>
<dbReference type="PDB" id="3OEV">
    <property type="method" value="X-ray"/>
    <property type="resolution" value="2.85 A"/>
    <property type="chains" value="I/W=2-205"/>
</dbReference>
<dbReference type="PDB" id="3OKJ">
    <property type="method" value="X-ray"/>
    <property type="resolution" value="2.70 A"/>
    <property type="chains" value="I/W=2-205"/>
</dbReference>
<dbReference type="PDB" id="3SDI">
    <property type="method" value="X-ray"/>
    <property type="resolution" value="2.65 A"/>
    <property type="chains" value="I/W=2-205"/>
</dbReference>
<dbReference type="PDB" id="3SDK">
    <property type="method" value="X-ray"/>
    <property type="resolution" value="2.70 A"/>
    <property type="chains" value="I/W=2-205"/>
</dbReference>
<dbReference type="PDB" id="3SHJ">
    <property type="method" value="X-ray"/>
    <property type="resolution" value="2.80 A"/>
    <property type="chains" value="I/W=2-205"/>
</dbReference>
<dbReference type="PDB" id="3TDD">
    <property type="method" value="X-ray"/>
    <property type="resolution" value="2.70 A"/>
    <property type="chains" value="I/W=2-205"/>
</dbReference>
<dbReference type="PDB" id="3UN4">
    <property type="method" value="X-ray"/>
    <property type="resolution" value="3.40 A"/>
    <property type="chains" value="I/W=1-205"/>
</dbReference>
<dbReference type="PDB" id="3UN8">
    <property type="method" value="X-ray"/>
    <property type="resolution" value="2.70 A"/>
    <property type="chains" value="I/W=1-205"/>
</dbReference>
<dbReference type="PDB" id="3WXR">
    <property type="method" value="X-ray"/>
    <property type="resolution" value="3.15 A"/>
    <property type="chains" value="J/X=1-205"/>
</dbReference>
<dbReference type="PDB" id="4CR2">
    <property type="method" value="EM"/>
    <property type="resolution" value="7.70 A"/>
    <property type="chains" value="3=1-205"/>
</dbReference>
<dbReference type="PDB" id="4CR3">
    <property type="method" value="EM"/>
    <property type="resolution" value="9.30 A"/>
    <property type="chains" value="3=1-205"/>
</dbReference>
<dbReference type="PDB" id="4CR4">
    <property type="method" value="EM"/>
    <property type="resolution" value="8.80 A"/>
    <property type="chains" value="3=1-205"/>
</dbReference>
<dbReference type="PDB" id="4EU2">
    <property type="method" value="X-ray"/>
    <property type="resolution" value="2.51 A"/>
    <property type="chains" value="J/X=2-205"/>
</dbReference>
<dbReference type="PDB" id="4FZC">
    <property type="method" value="X-ray"/>
    <property type="resolution" value="2.80 A"/>
    <property type="chains" value="I/W=2-205"/>
</dbReference>
<dbReference type="PDB" id="4FZG">
    <property type="method" value="X-ray"/>
    <property type="resolution" value="3.00 A"/>
    <property type="chains" value="I/W=2-205"/>
</dbReference>
<dbReference type="PDB" id="4G4S">
    <property type="method" value="X-ray"/>
    <property type="resolution" value="2.49 A"/>
    <property type="chains" value="J=1-205"/>
</dbReference>
<dbReference type="PDB" id="4GK7">
    <property type="method" value="X-ray"/>
    <property type="resolution" value="2.80 A"/>
    <property type="chains" value="I/W=2-205"/>
</dbReference>
<dbReference type="PDB" id="4HNP">
    <property type="method" value="X-ray"/>
    <property type="resolution" value="2.80 A"/>
    <property type="chains" value="I/W=2-205"/>
</dbReference>
<dbReference type="PDB" id="4HRC">
    <property type="method" value="X-ray"/>
    <property type="resolution" value="2.80 A"/>
    <property type="chains" value="I/W=2-205"/>
</dbReference>
<dbReference type="PDB" id="4HRD">
    <property type="method" value="X-ray"/>
    <property type="resolution" value="2.80 A"/>
    <property type="chains" value="I/W=2-205"/>
</dbReference>
<dbReference type="PDB" id="4INR">
    <property type="method" value="X-ray"/>
    <property type="resolution" value="2.70 A"/>
    <property type="chains" value="I/W=1-205"/>
</dbReference>
<dbReference type="PDB" id="4INT">
    <property type="method" value="X-ray"/>
    <property type="resolution" value="2.90 A"/>
    <property type="chains" value="I/W=1-205"/>
</dbReference>
<dbReference type="PDB" id="4INU">
    <property type="method" value="X-ray"/>
    <property type="resolution" value="3.10 A"/>
    <property type="chains" value="I/W=1-205"/>
</dbReference>
<dbReference type="PDB" id="4J70">
    <property type="method" value="X-ray"/>
    <property type="resolution" value="2.80 A"/>
    <property type="chains" value="I/W=1-205"/>
</dbReference>
<dbReference type="PDB" id="4JSQ">
    <property type="method" value="X-ray"/>
    <property type="resolution" value="2.80 A"/>
    <property type="chains" value="I/W=1-205"/>
</dbReference>
<dbReference type="PDB" id="4JSU">
    <property type="method" value="X-ray"/>
    <property type="resolution" value="2.90 A"/>
    <property type="chains" value="I/W=1-205"/>
</dbReference>
<dbReference type="PDB" id="4JT0">
    <property type="method" value="X-ray"/>
    <property type="resolution" value="3.10 A"/>
    <property type="chains" value="I/W=1-205"/>
</dbReference>
<dbReference type="PDB" id="4LQI">
    <property type="method" value="X-ray"/>
    <property type="resolution" value="2.70 A"/>
    <property type="chains" value="I/W=2-205"/>
</dbReference>
<dbReference type="PDB" id="4LTC">
    <property type="method" value="X-ray"/>
    <property type="resolution" value="2.50 A"/>
    <property type="chains" value="I/W=1-205"/>
</dbReference>
<dbReference type="PDB" id="4NNN">
    <property type="method" value="X-ray"/>
    <property type="resolution" value="2.50 A"/>
    <property type="chains" value="I/W=1-205"/>
</dbReference>
<dbReference type="PDB" id="4NNW">
    <property type="method" value="X-ray"/>
    <property type="resolution" value="2.60 A"/>
    <property type="chains" value="I/W=1-205"/>
</dbReference>
<dbReference type="PDB" id="4NO1">
    <property type="method" value="X-ray"/>
    <property type="resolution" value="2.50 A"/>
    <property type="chains" value="I/W=1-205"/>
</dbReference>
<dbReference type="PDB" id="4NO6">
    <property type="method" value="X-ray"/>
    <property type="resolution" value="3.00 A"/>
    <property type="chains" value="I/W=1-205"/>
</dbReference>
<dbReference type="PDB" id="4NO8">
    <property type="method" value="X-ray"/>
    <property type="resolution" value="2.70 A"/>
    <property type="chains" value="I/W=1-205"/>
</dbReference>
<dbReference type="PDB" id="4NO9">
    <property type="method" value="X-ray"/>
    <property type="resolution" value="2.90 A"/>
    <property type="chains" value="I/W=1-205"/>
</dbReference>
<dbReference type="PDB" id="4Q1S">
    <property type="method" value="X-ray"/>
    <property type="resolution" value="2.60 A"/>
    <property type="chains" value="I/W=1-205"/>
</dbReference>
<dbReference type="PDB" id="4QBY">
    <property type="method" value="X-ray"/>
    <property type="resolution" value="3.00 A"/>
    <property type="chains" value="I/W=1-205"/>
</dbReference>
<dbReference type="PDB" id="4QLQ">
    <property type="method" value="X-ray"/>
    <property type="resolution" value="2.40 A"/>
    <property type="chains" value="I/W=1-205"/>
</dbReference>
<dbReference type="PDB" id="4QLS">
    <property type="method" value="X-ray"/>
    <property type="resolution" value="2.80 A"/>
    <property type="chains" value="I/W=1-205"/>
</dbReference>
<dbReference type="PDB" id="4QLT">
    <property type="method" value="X-ray"/>
    <property type="resolution" value="2.80 A"/>
    <property type="chains" value="I/W=1-205"/>
</dbReference>
<dbReference type="PDB" id="4QLU">
    <property type="method" value="X-ray"/>
    <property type="resolution" value="2.80 A"/>
    <property type="chains" value="I/W=1-205"/>
</dbReference>
<dbReference type="PDB" id="4QLV">
    <property type="method" value="X-ray"/>
    <property type="resolution" value="2.90 A"/>
    <property type="chains" value="I/W=1-205"/>
</dbReference>
<dbReference type="PDB" id="4QUX">
    <property type="method" value="X-ray"/>
    <property type="resolution" value="3.00 A"/>
    <property type="chains" value="I/W=1-205"/>
</dbReference>
<dbReference type="PDB" id="4QUY">
    <property type="method" value="X-ray"/>
    <property type="resolution" value="2.80 A"/>
    <property type="chains" value="I/W=1-205"/>
</dbReference>
<dbReference type="PDB" id="4QV0">
    <property type="method" value="X-ray"/>
    <property type="resolution" value="3.10 A"/>
    <property type="chains" value="I/W=1-205"/>
</dbReference>
<dbReference type="PDB" id="4QV1">
    <property type="method" value="X-ray"/>
    <property type="resolution" value="2.50 A"/>
    <property type="chains" value="I/W=1-205"/>
</dbReference>
<dbReference type="PDB" id="4QV3">
    <property type="method" value="X-ray"/>
    <property type="resolution" value="3.00 A"/>
    <property type="chains" value="I/W=1-205"/>
</dbReference>
<dbReference type="PDB" id="4QV4">
    <property type="method" value="X-ray"/>
    <property type="resolution" value="2.70 A"/>
    <property type="chains" value="I/W=1-205"/>
</dbReference>
<dbReference type="PDB" id="4QV5">
    <property type="method" value="X-ray"/>
    <property type="resolution" value="2.70 A"/>
    <property type="chains" value="I/W=1-205"/>
</dbReference>
<dbReference type="PDB" id="4QV6">
    <property type="method" value="X-ray"/>
    <property type="resolution" value="2.80 A"/>
    <property type="chains" value="I/W=1-205"/>
</dbReference>
<dbReference type="PDB" id="4QV7">
    <property type="method" value="X-ray"/>
    <property type="resolution" value="2.60 A"/>
    <property type="chains" value="I/W=1-205"/>
</dbReference>
<dbReference type="PDB" id="4QV8">
    <property type="method" value="X-ray"/>
    <property type="resolution" value="2.90 A"/>
    <property type="chains" value="I/W=1-205"/>
</dbReference>
<dbReference type="PDB" id="4QV9">
    <property type="method" value="X-ray"/>
    <property type="resolution" value="2.60 A"/>
    <property type="chains" value="I/W=1-205"/>
</dbReference>
<dbReference type="PDB" id="4QVL">
    <property type="method" value="X-ray"/>
    <property type="resolution" value="2.80 A"/>
    <property type="chains" value="I/W=1-205"/>
</dbReference>
<dbReference type="PDB" id="4QVM">
    <property type="method" value="X-ray"/>
    <property type="resolution" value="2.80 A"/>
    <property type="chains" value="I/W=1-205"/>
</dbReference>
<dbReference type="PDB" id="4QVN">
    <property type="method" value="X-ray"/>
    <property type="resolution" value="2.90 A"/>
    <property type="chains" value="I/W=1-205"/>
</dbReference>
<dbReference type="PDB" id="4QVP">
    <property type="method" value="X-ray"/>
    <property type="resolution" value="2.30 A"/>
    <property type="chains" value="I/W=1-205"/>
</dbReference>
<dbReference type="PDB" id="4QVQ">
    <property type="method" value="X-ray"/>
    <property type="resolution" value="2.60 A"/>
    <property type="chains" value="I/W=1-205"/>
</dbReference>
<dbReference type="PDB" id="4QVV">
    <property type="method" value="X-ray"/>
    <property type="resolution" value="2.80 A"/>
    <property type="chains" value="I/W=1-205"/>
</dbReference>
<dbReference type="PDB" id="4QVW">
    <property type="method" value="X-ray"/>
    <property type="resolution" value="3.00 A"/>
    <property type="chains" value="I/W=1-205"/>
</dbReference>
<dbReference type="PDB" id="4QVY">
    <property type="method" value="X-ray"/>
    <property type="resolution" value="2.51 A"/>
    <property type="chains" value="I/W=1-205"/>
</dbReference>
<dbReference type="PDB" id="4QW0">
    <property type="method" value="X-ray"/>
    <property type="resolution" value="2.90 A"/>
    <property type="chains" value="I/W=1-205"/>
</dbReference>
<dbReference type="PDB" id="4QW1">
    <property type="method" value="X-ray"/>
    <property type="resolution" value="2.90 A"/>
    <property type="chains" value="I/W=1-205"/>
</dbReference>
<dbReference type="PDB" id="4QW3">
    <property type="method" value="X-ray"/>
    <property type="resolution" value="2.90 A"/>
    <property type="chains" value="I/W=1-205"/>
</dbReference>
<dbReference type="PDB" id="4QW4">
    <property type="method" value="X-ray"/>
    <property type="resolution" value="2.80 A"/>
    <property type="chains" value="I/W=1-205"/>
</dbReference>
<dbReference type="PDB" id="4QW5">
    <property type="method" value="X-ray"/>
    <property type="resolution" value="3.00 A"/>
    <property type="chains" value="I/W=1-205"/>
</dbReference>
<dbReference type="PDB" id="4QW6">
    <property type="method" value="X-ray"/>
    <property type="resolution" value="2.90 A"/>
    <property type="chains" value="I/W=1-205"/>
</dbReference>
<dbReference type="PDB" id="4QW7">
    <property type="method" value="X-ray"/>
    <property type="resolution" value="2.70 A"/>
    <property type="chains" value="I/W=1-205"/>
</dbReference>
<dbReference type="PDB" id="4QWF">
    <property type="method" value="X-ray"/>
    <property type="resolution" value="3.00 A"/>
    <property type="chains" value="I/W=1-205"/>
</dbReference>
<dbReference type="PDB" id="4QWG">
    <property type="method" value="X-ray"/>
    <property type="resolution" value="2.60 A"/>
    <property type="chains" value="I/W=1-205"/>
</dbReference>
<dbReference type="PDB" id="4QWI">
    <property type="method" value="X-ray"/>
    <property type="resolution" value="2.60 A"/>
    <property type="chains" value="I/W=1-205"/>
</dbReference>
<dbReference type="PDB" id="4QWJ">
    <property type="method" value="X-ray"/>
    <property type="resolution" value="2.90 A"/>
    <property type="chains" value="I/W=1-205"/>
</dbReference>
<dbReference type="PDB" id="4QWK">
    <property type="method" value="X-ray"/>
    <property type="resolution" value="2.80 A"/>
    <property type="chains" value="I/W=1-205"/>
</dbReference>
<dbReference type="PDB" id="4QWL">
    <property type="method" value="X-ray"/>
    <property type="resolution" value="2.60 A"/>
    <property type="chains" value="I/W=1-205"/>
</dbReference>
<dbReference type="PDB" id="4QWR">
    <property type="method" value="X-ray"/>
    <property type="resolution" value="2.90 A"/>
    <property type="chains" value="I/W=1-205"/>
</dbReference>
<dbReference type="PDB" id="4QWS">
    <property type="method" value="X-ray"/>
    <property type="resolution" value="3.00 A"/>
    <property type="chains" value="I/W=1-205"/>
</dbReference>
<dbReference type="PDB" id="4QWU">
    <property type="method" value="X-ray"/>
    <property type="resolution" value="3.00 A"/>
    <property type="chains" value="I/W=1-205"/>
</dbReference>
<dbReference type="PDB" id="4QWX">
    <property type="method" value="X-ray"/>
    <property type="resolution" value="2.90 A"/>
    <property type="chains" value="I/W=1-205"/>
</dbReference>
<dbReference type="PDB" id="4QXJ">
    <property type="method" value="X-ray"/>
    <property type="resolution" value="2.80 A"/>
    <property type="chains" value="I/W=1-205"/>
</dbReference>
<dbReference type="PDB" id="4QZ0">
    <property type="method" value="X-ray"/>
    <property type="resolution" value="3.00 A"/>
    <property type="chains" value="I/W=1-205"/>
</dbReference>
<dbReference type="PDB" id="4QZ1">
    <property type="method" value="X-ray"/>
    <property type="resolution" value="3.00 A"/>
    <property type="chains" value="I/W=1-205"/>
</dbReference>
<dbReference type="PDB" id="4QZ2">
    <property type="method" value="X-ray"/>
    <property type="resolution" value="2.70 A"/>
    <property type="chains" value="I/W=1-205"/>
</dbReference>
<dbReference type="PDB" id="4QZ3">
    <property type="method" value="X-ray"/>
    <property type="resolution" value="2.80 A"/>
    <property type="chains" value="I/W=1-205"/>
</dbReference>
<dbReference type="PDB" id="4QZ4">
    <property type="method" value="X-ray"/>
    <property type="resolution" value="3.00 A"/>
    <property type="chains" value="I/W=1-205"/>
</dbReference>
<dbReference type="PDB" id="4QZ5">
    <property type="method" value="X-ray"/>
    <property type="resolution" value="2.80 A"/>
    <property type="chains" value="I/W=1-205"/>
</dbReference>
<dbReference type="PDB" id="4QZ6">
    <property type="method" value="X-ray"/>
    <property type="resolution" value="2.90 A"/>
    <property type="chains" value="I/W=1-205"/>
</dbReference>
<dbReference type="PDB" id="4QZ7">
    <property type="method" value="X-ray"/>
    <property type="resolution" value="2.80 A"/>
    <property type="chains" value="I/W=1-205"/>
</dbReference>
<dbReference type="PDB" id="4QZW">
    <property type="method" value="X-ray"/>
    <property type="resolution" value="3.00 A"/>
    <property type="chains" value="I/W=1-205"/>
</dbReference>
<dbReference type="PDB" id="4QZX">
    <property type="method" value="X-ray"/>
    <property type="resolution" value="2.60 A"/>
    <property type="chains" value="I/W=1-205"/>
</dbReference>
<dbReference type="PDB" id="4QZZ">
    <property type="method" value="X-ray"/>
    <property type="resolution" value="2.90 A"/>
    <property type="chains" value="I/W=1-205"/>
</dbReference>
<dbReference type="PDB" id="4R00">
    <property type="method" value="X-ray"/>
    <property type="resolution" value="2.80 A"/>
    <property type="chains" value="I/W=1-205"/>
</dbReference>
<dbReference type="PDB" id="4R02">
    <property type="method" value="X-ray"/>
    <property type="resolution" value="2.50 A"/>
    <property type="chains" value="I/W=1-205"/>
</dbReference>
<dbReference type="PDB" id="4R17">
    <property type="method" value="X-ray"/>
    <property type="resolution" value="2.10 A"/>
    <property type="chains" value="I/W=1-205"/>
</dbReference>
<dbReference type="PDB" id="4R18">
    <property type="method" value="X-ray"/>
    <property type="resolution" value="2.40 A"/>
    <property type="chains" value="I/W=1-205"/>
</dbReference>
<dbReference type="PDB" id="4RUR">
    <property type="method" value="X-ray"/>
    <property type="resolution" value="2.50 A"/>
    <property type="chains" value="I/W=1-205"/>
</dbReference>
<dbReference type="PDB" id="4V7O">
    <property type="method" value="X-ray"/>
    <property type="resolution" value="3.00 A"/>
    <property type="chains" value="AN/AZ/BJ/BX=2-205"/>
</dbReference>
<dbReference type="PDB" id="4X6Z">
    <property type="method" value="X-ray"/>
    <property type="resolution" value="2.70 A"/>
    <property type="chains" value="J/X=1-205"/>
</dbReference>
<dbReference type="PDB" id="4Y69">
    <property type="method" value="X-ray"/>
    <property type="resolution" value="2.90 A"/>
    <property type="chains" value="I/W=1-205"/>
</dbReference>
<dbReference type="PDB" id="4Y6A">
    <property type="method" value="X-ray"/>
    <property type="resolution" value="2.60 A"/>
    <property type="chains" value="I/W=1-205"/>
</dbReference>
<dbReference type="PDB" id="4Y6V">
    <property type="method" value="X-ray"/>
    <property type="resolution" value="2.80 A"/>
    <property type="chains" value="I/W=1-205"/>
</dbReference>
<dbReference type="PDB" id="4Y6Z">
    <property type="method" value="X-ray"/>
    <property type="resolution" value="2.70 A"/>
    <property type="chains" value="I/W=1-205"/>
</dbReference>
<dbReference type="PDB" id="4Y70">
    <property type="method" value="X-ray"/>
    <property type="resolution" value="2.40 A"/>
    <property type="chains" value="I/W=1-205"/>
</dbReference>
<dbReference type="PDB" id="4Y74">
    <property type="method" value="X-ray"/>
    <property type="resolution" value="2.70 A"/>
    <property type="chains" value="I/W=1-205"/>
</dbReference>
<dbReference type="PDB" id="4Y75">
    <property type="method" value="X-ray"/>
    <property type="resolution" value="2.80 A"/>
    <property type="chains" value="I/W=1-205"/>
</dbReference>
<dbReference type="PDB" id="4Y77">
    <property type="method" value="X-ray"/>
    <property type="resolution" value="2.50 A"/>
    <property type="chains" value="I/W=1-205"/>
</dbReference>
<dbReference type="PDB" id="4Y78">
    <property type="method" value="X-ray"/>
    <property type="resolution" value="2.80 A"/>
    <property type="chains" value="I/W=1-205"/>
</dbReference>
<dbReference type="PDB" id="4Y7W">
    <property type="method" value="X-ray"/>
    <property type="resolution" value="2.50 A"/>
    <property type="chains" value="I/W=1-205"/>
</dbReference>
<dbReference type="PDB" id="4Y7X">
    <property type="method" value="X-ray"/>
    <property type="resolution" value="2.60 A"/>
    <property type="chains" value="I/W=1-205"/>
</dbReference>
<dbReference type="PDB" id="4Y7Y">
    <property type="method" value="X-ray"/>
    <property type="resolution" value="2.40 A"/>
    <property type="chains" value="I/W=1-205"/>
</dbReference>
<dbReference type="PDB" id="4Y80">
    <property type="method" value="X-ray"/>
    <property type="resolution" value="2.50 A"/>
    <property type="chains" value="I/W=1-205"/>
</dbReference>
<dbReference type="PDB" id="4Y81">
    <property type="method" value="X-ray"/>
    <property type="resolution" value="2.80 A"/>
    <property type="chains" value="I/W=1-205"/>
</dbReference>
<dbReference type="PDB" id="4Y82">
    <property type="method" value="X-ray"/>
    <property type="resolution" value="2.80 A"/>
    <property type="chains" value="I/W=1-205"/>
</dbReference>
<dbReference type="PDB" id="4Y84">
    <property type="method" value="X-ray"/>
    <property type="resolution" value="2.70 A"/>
    <property type="chains" value="I/W=1-205"/>
</dbReference>
<dbReference type="PDB" id="4Y8G">
    <property type="method" value="X-ray"/>
    <property type="resolution" value="2.60 A"/>
    <property type="chains" value="I/W=1-205"/>
</dbReference>
<dbReference type="PDB" id="4Y8H">
    <property type="method" value="X-ray"/>
    <property type="resolution" value="2.50 A"/>
    <property type="chains" value="I/W=1-205"/>
</dbReference>
<dbReference type="PDB" id="4Y8I">
    <property type="method" value="X-ray"/>
    <property type="resolution" value="2.60 A"/>
    <property type="chains" value="I/W=1-205"/>
</dbReference>
<dbReference type="PDB" id="4Y8J">
    <property type="method" value="X-ray"/>
    <property type="resolution" value="2.70 A"/>
    <property type="chains" value="I/W=1-205"/>
</dbReference>
<dbReference type="PDB" id="4Y8K">
    <property type="method" value="X-ray"/>
    <property type="resolution" value="2.60 A"/>
    <property type="chains" value="I/W=1-205"/>
</dbReference>
<dbReference type="PDB" id="4Y8L">
    <property type="method" value="X-ray"/>
    <property type="resolution" value="2.40 A"/>
    <property type="chains" value="I/W=1-205"/>
</dbReference>
<dbReference type="PDB" id="4Y8M">
    <property type="method" value="X-ray"/>
    <property type="resolution" value="2.80 A"/>
    <property type="chains" value="I/W=1-205"/>
</dbReference>
<dbReference type="PDB" id="4Y8N">
    <property type="method" value="X-ray"/>
    <property type="resolution" value="2.60 A"/>
    <property type="chains" value="I/W=1-205"/>
</dbReference>
<dbReference type="PDB" id="4Y8O">
    <property type="method" value="X-ray"/>
    <property type="resolution" value="2.70 A"/>
    <property type="chains" value="I/W=1-205"/>
</dbReference>
<dbReference type="PDB" id="4Y8P">
    <property type="method" value="X-ray"/>
    <property type="resolution" value="2.80 A"/>
    <property type="chains" value="I/W=1-205"/>
</dbReference>
<dbReference type="PDB" id="4Y8Q">
    <property type="method" value="X-ray"/>
    <property type="resolution" value="2.60 A"/>
    <property type="chains" value="I/W=1-205"/>
</dbReference>
<dbReference type="PDB" id="4Y8R">
    <property type="method" value="X-ray"/>
    <property type="resolution" value="2.70 A"/>
    <property type="chains" value="I/W=1-205"/>
</dbReference>
<dbReference type="PDB" id="4Y8S">
    <property type="method" value="X-ray"/>
    <property type="resolution" value="2.70 A"/>
    <property type="chains" value="I/W=1-205"/>
</dbReference>
<dbReference type="PDB" id="4Y8T">
    <property type="method" value="X-ray"/>
    <property type="resolution" value="2.70 A"/>
    <property type="chains" value="I/W=1-205"/>
</dbReference>
<dbReference type="PDB" id="4Y8U">
    <property type="method" value="X-ray"/>
    <property type="resolution" value="2.90 A"/>
    <property type="chains" value="I/W=1-205"/>
</dbReference>
<dbReference type="PDB" id="4Y9Y">
    <property type="method" value="X-ray"/>
    <property type="resolution" value="2.80 A"/>
    <property type="chains" value="I/W=1-205"/>
</dbReference>
<dbReference type="PDB" id="4Y9Z">
    <property type="method" value="X-ray"/>
    <property type="resolution" value="2.80 A"/>
    <property type="chains" value="I/W=1-205"/>
</dbReference>
<dbReference type="PDB" id="4YA0">
    <property type="method" value="X-ray"/>
    <property type="resolution" value="2.80 A"/>
    <property type="chains" value="I/W=1-205"/>
</dbReference>
<dbReference type="PDB" id="4YA1">
    <property type="method" value="X-ray"/>
    <property type="resolution" value="2.90 A"/>
    <property type="chains" value="I/W=1-205"/>
</dbReference>
<dbReference type="PDB" id="4YA2">
    <property type="method" value="X-ray"/>
    <property type="resolution" value="2.70 A"/>
    <property type="chains" value="I/W=1-205"/>
</dbReference>
<dbReference type="PDB" id="4YA3">
    <property type="method" value="X-ray"/>
    <property type="resolution" value="2.70 A"/>
    <property type="chains" value="I/W=1-205"/>
</dbReference>
<dbReference type="PDB" id="4YA4">
    <property type="method" value="X-ray"/>
    <property type="resolution" value="2.90 A"/>
    <property type="chains" value="I/W=1-205"/>
</dbReference>
<dbReference type="PDB" id="4YA5">
    <property type="method" value="X-ray"/>
    <property type="resolution" value="2.50 A"/>
    <property type="chains" value="I/W=1-205"/>
</dbReference>
<dbReference type="PDB" id="4YA7">
    <property type="method" value="X-ray"/>
    <property type="resolution" value="2.70 A"/>
    <property type="chains" value="I/W=1-205"/>
</dbReference>
<dbReference type="PDB" id="4YA9">
    <property type="method" value="X-ray"/>
    <property type="resolution" value="2.70 A"/>
    <property type="chains" value="I/W=1-205"/>
</dbReference>
<dbReference type="PDB" id="4Z1L">
    <property type="method" value="X-ray"/>
    <property type="resolution" value="3.00 A"/>
    <property type="chains" value="I/W=1-205"/>
</dbReference>
<dbReference type="PDB" id="5A5B">
    <property type="method" value="EM"/>
    <property type="resolution" value="9.50 A"/>
    <property type="chains" value="3=1-205"/>
</dbReference>
<dbReference type="PDB" id="5AHJ">
    <property type="method" value="X-ray"/>
    <property type="resolution" value="2.80 A"/>
    <property type="chains" value="I/W=1-205"/>
</dbReference>
<dbReference type="PDB" id="5BOU">
    <property type="method" value="X-ray"/>
    <property type="resolution" value="2.60 A"/>
    <property type="chains" value="I/W=1-205"/>
</dbReference>
<dbReference type="PDB" id="5BXL">
    <property type="method" value="X-ray"/>
    <property type="resolution" value="2.80 A"/>
    <property type="chains" value="I/W=1-205"/>
</dbReference>
<dbReference type="PDB" id="5BXN">
    <property type="method" value="X-ray"/>
    <property type="resolution" value="2.80 A"/>
    <property type="chains" value="I/W=1-205"/>
</dbReference>
<dbReference type="PDB" id="5CGF">
    <property type="method" value="X-ray"/>
    <property type="resolution" value="2.80 A"/>
    <property type="chains" value="I/W=1-205"/>
</dbReference>
<dbReference type="PDB" id="5CGG">
    <property type="method" value="X-ray"/>
    <property type="resolution" value="2.90 A"/>
    <property type="chains" value="I/W=1-205"/>
</dbReference>
<dbReference type="PDB" id="5CGH">
    <property type="method" value="X-ray"/>
    <property type="resolution" value="2.50 A"/>
    <property type="chains" value="I/W=1-205"/>
</dbReference>
<dbReference type="PDB" id="5CGI">
    <property type="method" value="X-ray"/>
    <property type="resolution" value="2.80 A"/>
    <property type="chains" value="I/W=1-205"/>
</dbReference>
<dbReference type="PDB" id="5CZ4">
    <property type="method" value="X-ray"/>
    <property type="resolution" value="2.30 A"/>
    <property type="chains" value="I/W=1-205"/>
</dbReference>
<dbReference type="PDB" id="5CZ5">
    <property type="method" value="X-ray"/>
    <property type="resolution" value="2.80 A"/>
    <property type="chains" value="I/W=1-205"/>
</dbReference>
<dbReference type="PDB" id="5CZ6">
    <property type="method" value="X-ray"/>
    <property type="resolution" value="2.70 A"/>
    <property type="chains" value="I/W=1-205"/>
</dbReference>
<dbReference type="PDB" id="5CZ7">
    <property type="method" value="X-ray"/>
    <property type="resolution" value="2.50 A"/>
    <property type="chains" value="I/W=1-205"/>
</dbReference>
<dbReference type="PDB" id="5CZ8">
    <property type="method" value="X-ray"/>
    <property type="resolution" value="2.80 A"/>
    <property type="chains" value="I/W=1-205"/>
</dbReference>
<dbReference type="PDB" id="5CZ9">
    <property type="method" value="X-ray"/>
    <property type="resolution" value="2.90 A"/>
    <property type="chains" value="I/W=1-205"/>
</dbReference>
<dbReference type="PDB" id="5CZA">
    <property type="method" value="X-ray"/>
    <property type="resolution" value="2.50 A"/>
    <property type="chains" value="I/W=1-205"/>
</dbReference>
<dbReference type="PDB" id="5D0S">
    <property type="method" value="X-ray"/>
    <property type="resolution" value="2.50 A"/>
    <property type="chains" value="I/W=1-205"/>
</dbReference>
<dbReference type="PDB" id="5D0T">
    <property type="method" value="X-ray"/>
    <property type="resolution" value="2.60 A"/>
    <property type="chains" value="I/W=1-205"/>
</dbReference>
<dbReference type="PDB" id="5D0V">
    <property type="method" value="X-ray"/>
    <property type="resolution" value="2.90 A"/>
    <property type="chains" value="I/W=1-205"/>
</dbReference>
<dbReference type="PDB" id="5D0W">
    <property type="method" value="X-ray"/>
    <property type="resolution" value="2.80 A"/>
    <property type="chains" value="I/W=1-205"/>
</dbReference>
<dbReference type="PDB" id="5D0X">
    <property type="method" value="X-ray"/>
    <property type="resolution" value="2.60 A"/>
    <property type="chains" value="I/W=1-205"/>
</dbReference>
<dbReference type="PDB" id="5D0Z">
    <property type="method" value="X-ray"/>
    <property type="resolution" value="2.90 A"/>
    <property type="chains" value="I/W=1-205"/>
</dbReference>
<dbReference type="PDB" id="5DKI">
    <property type="method" value="X-ray"/>
    <property type="resolution" value="2.80 A"/>
    <property type="chains" value="I/W=1-205"/>
</dbReference>
<dbReference type="PDB" id="5DKJ">
    <property type="method" value="X-ray"/>
    <property type="resolution" value="2.80 A"/>
    <property type="chains" value="I/W=1-205"/>
</dbReference>
<dbReference type="PDB" id="5FG7">
    <property type="method" value="X-ray"/>
    <property type="resolution" value="2.70 A"/>
    <property type="chains" value="I/W=1-205"/>
</dbReference>
<dbReference type="PDB" id="5FG9">
    <property type="method" value="X-ray"/>
    <property type="resolution" value="2.60 A"/>
    <property type="chains" value="I/W=1-205"/>
</dbReference>
<dbReference type="PDB" id="5FGA">
    <property type="method" value="X-ray"/>
    <property type="resolution" value="2.70 A"/>
    <property type="chains" value="I/W=1-205"/>
</dbReference>
<dbReference type="PDB" id="5FGD">
    <property type="method" value="X-ray"/>
    <property type="resolution" value="2.80 A"/>
    <property type="chains" value="I/W=1-205"/>
</dbReference>
<dbReference type="PDB" id="5FGE">
    <property type="method" value="X-ray"/>
    <property type="resolution" value="2.60 A"/>
    <property type="chains" value="I/W=1-205"/>
</dbReference>
<dbReference type="PDB" id="5FGF">
    <property type="method" value="X-ray"/>
    <property type="resolution" value="2.60 A"/>
    <property type="chains" value="I/W=1-205"/>
</dbReference>
<dbReference type="PDB" id="5FGG">
    <property type="method" value="X-ray"/>
    <property type="resolution" value="2.70 A"/>
    <property type="chains" value="I/W=1-205"/>
</dbReference>
<dbReference type="PDB" id="5FGH">
    <property type="method" value="X-ray"/>
    <property type="resolution" value="2.80 A"/>
    <property type="chains" value="I/W=1-205"/>
</dbReference>
<dbReference type="PDB" id="5FGI">
    <property type="method" value="X-ray"/>
    <property type="resolution" value="2.90 A"/>
    <property type="chains" value="I/W=1-205"/>
</dbReference>
<dbReference type="PDB" id="5FHS">
    <property type="method" value="X-ray"/>
    <property type="resolution" value="2.70 A"/>
    <property type="chains" value="I/W=1-205"/>
</dbReference>
<dbReference type="PDB" id="5JHR">
    <property type="method" value="X-ray"/>
    <property type="resolution" value="2.90 A"/>
    <property type="chains" value="I/W=1-205"/>
</dbReference>
<dbReference type="PDB" id="5JHS">
    <property type="method" value="X-ray"/>
    <property type="resolution" value="3.00 A"/>
    <property type="chains" value="I/W=1-205"/>
</dbReference>
<dbReference type="PDB" id="5L52">
    <property type="method" value="X-ray"/>
    <property type="resolution" value="2.70 A"/>
    <property type="chains" value="I/W=1-205"/>
</dbReference>
<dbReference type="PDB" id="5L54">
    <property type="method" value="X-ray"/>
    <property type="resolution" value="2.80 A"/>
    <property type="chains" value="I/W=1-205"/>
</dbReference>
<dbReference type="PDB" id="5L55">
    <property type="method" value="X-ray"/>
    <property type="resolution" value="2.90 A"/>
    <property type="chains" value="I/W=1-205"/>
</dbReference>
<dbReference type="PDB" id="5L5A">
    <property type="method" value="X-ray"/>
    <property type="resolution" value="2.40 A"/>
    <property type="chains" value="I/W=1-205"/>
</dbReference>
<dbReference type="PDB" id="5L5B">
    <property type="method" value="X-ray"/>
    <property type="resolution" value="2.80 A"/>
    <property type="chains" value="I/W=1-205"/>
</dbReference>
<dbReference type="PDB" id="5L5D">
    <property type="method" value="X-ray"/>
    <property type="resolution" value="2.80 A"/>
    <property type="chains" value="I/W=1-205"/>
</dbReference>
<dbReference type="PDB" id="5L5E">
    <property type="method" value="X-ray"/>
    <property type="resolution" value="2.90 A"/>
    <property type="chains" value="I/W=1-205"/>
</dbReference>
<dbReference type="PDB" id="5L5F">
    <property type="method" value="X-ray"/>
    <property type="resolution" value="2.50 A"/>
    <property type="chains" value="I/W=1-205"/>
</dbReference>
<dbReference type="PDB" id="5L5H">
    <property type="method" value="X-ray"/>
    <property type="resolution" value="2.60 A"/>
    <property type="chains" value="I/W=1-205"/>
</dbReference>
<dbReference type="PDB" id="5L5I">
    <property type="method" value="X-ray"/>
    <property type="resolution" value="2.90 A"/>
    <property type="chains" value="I/W=1-205"/>
</dbReference>
<dbReference type="PDB" id="5L5J">
    <property type="method" value="X-ray"/>
    <property type="resolution" value="2.90 A"/>
    <property type="chains" value="I/W=1-205"/>
</dbReference>
<dbReference type="PDB" id="5L5O">
    <property type="method" value="X-ray"/>
    <property type="resolution" value="2.60 A"/>
    <property type="chains" value="I/W=1-205"/>
</dbReference>
<dbReference type="PDB" id="5L5P">
    <property type="method" value="X-ray"/>
    <property type="resolution" value="2.80 A"/>
    <property type="chains" value="I/W=1-205"/>
</dbReference>
<dbReference type="PDB" id="5L5Q">
    <property type="method" value="X-ray"/>
    <property type="resolution" value="2.80 A"/>
    <property type="chains" value="I/W=1-205"/>
</dbReference>
<dbReference type="PDB" id="5L5R">
    <property type="method" value="X-ray"/>
    <property type="resolution" value="2.90 A"/>
    <property type="chains" value="I/W=1-205"/>
</dbReference>
<dbReference type="PDB" id="5L5S">
    <property type="method" value="X-ray"/>
    <property type="resolution" value="2.60 A"/>
    <property type="chains" value="I/W=1-205"/>
</dbReference>
<dbReference type="PDB" id="5L5T">
    <property type="method" value="X-ray"/>
    <property type="resolution" value="2.90 A"/>
    <property type="chains" value="I/W=1-205"/>
</dbReference>
<dbReference type="PDB" id="5L5U">
    <property type="method" value="X-ray"/>
    <property type="resolution" value="2.60 A"/>
    <property type="chains" value="I/W=1-205"/>
</dbReference>
<dbReference type="PDB" id="5L5V">
    <property type="method" value="X-ray"/>
    <property type="resolution" value="2.70 A"/>
    <property type="chains" value="I/W=1-205"/>
</dbReference>
<dbReference type="PDB" id="5L5W">
    <property type="method" value="X-ray"/>
    <property type="resolution" value="2.80 A"/>
    <property type="chains" value="I/W=1-205"/>
</dbReference>
<dbReference type="PDB" id="5L5X">
    <property type="method" value="X-ray"/>
    <property type="resolution" value="2.90 A"/>
    <property type="chains" value="I/W=1-205"/>
</dbReference>
<dbReference type="PDB" id="5L5Y">
    <property type="method" value="X-ray"/>
    <property type="resolution" value="2.70 A"/>
    <property type="chains" value="I/W=1-205"/>
</dbReference>
<dbReference type="PDB" id="5L5Z">
    <property type="method" value="X-ray"/>
    <property type="resolution" value="2.70 A"/>
    <property type="chains" value="I/W=1-205"/>
</dbReference>
<dbReference type="PDB" id="5L60">
    <property type="method" value="X-ray"/>
    <property type="resolution" value="2.70 A"/>
    <property type="chains" value="I/W=1-205"/>
</dbReference>
<dbReference type="PDB" id="5L61">
    <property type="method" value="X-ray"/>
    <property type="resolution" value="2.80 A"/>
    <property type="chains" value="I/W=1-205"/>
</dbReference>
<dbReference type="PDB" id="5L62">
    <property type="method" value="X-ray"/>
    <property type="resolution" value="2.80 A"/>
    <property type="chains" value="I/W=1-205"/>
</dbReference>
<dbReference type="PDB" id="5L63">
    <property type="method" value="X-ray"/>
    <property type="resolution" value="2.70 A"/>
    <property type="chains" value="I/W=1-205"/>
</dbReference>
<dbReference type="PDB" id="5L64">
    <property type="method" value="X-ray"/>
    <property type="resolution" value="2.70 A"/>
    <property type="chains" value="I/W=1-205"/>
</dbReference>
<dbReference type="PDB" id="5L65">
    <property type="method" value="X-ray"/>
    <property type="resolution" value="2.90 A"/>
    <property type="chains" value="I/W=1-205"/>
</dbReference>
<dbReference type="PDB" id="5L66">
    <property type="method" value="X-ray"/>
    <property type="resolution" value="2.80 A"/>
    <property type="chains" value="I/W=1-205"/>
</dbReference>
<dbReference type="PDB" id="5L67">
    <property type="method" value="X-ray"/>
    <property type="resolution" value="2.60 A"/>
    <property type="chains" value="I/W=1-205"/>
</dbReference>
<dbReference type="PDB" id="5L68">
    <property type="method" value="X-ray"/>
    <property type="resolution" value="2.80 A"/>
    <property type="chains" value="I/W=1-205"/>
</dbReference>
<dbReference type="PDB" id="5L69">
    <property type="method" value="X-ray"/>
    <property type="resolution" value="2.70 A"/>
    <property type="chains" value="I/W=1-205"/>
</dbReference>
<dbReference type="PDB" id="5L6A">
    <property type="method" value="X-ray"/>
    <property type="resolution" value="2.80 A"/>
    <property type="chains" value="I/W=1-205"/>
</dbReference>
<dbReference type="PDB" id="5L6B">
    <property type="method" value="X-ray"/>
    <property type="resolution" value="2.60 A"/>
    <property type="chains" value="I/W=1-205"/>
</dbReference>
<dbReference type="PDB" id="5L6C">
    <property type="method" value="X-ray"/>
    <property type="resolution" value="2.60 A"/>
    <property type="chains" value="I/W=1-205"/>
</dbReference>
<dbReference type="PDB" id="5LAI">
    <property type="method" value="X-ray"/>
    <property type="resolution" value="2.50 A"/>
    <property type="chains" value="I/W=1-205"/>
</dbReference>
<dbReference type="PDB" id="5LAJ">
    <property type="method" value="X-ray"/>
    <property type="resolution" value="2.90 A"/>
    <property type="chains" value="I/W=1-205"/>
</dbReference>
<dbReference type="PDB" id="5LTT">
    <property type="method" value="X-ray"/>
    <property type="resolution" value="2.70 A"/>
    <property type="chains" value="I/W=1-205"/>
</dbReference>
<dbReference type="PDB" id="5M2B">
    <property type="method" value="X-ray"/>
    <property type="resolution" value="2.70 A"/>
    <property type="chains" value="I/W=1-205"/>
</dbReference>
<dbReference type="PDB" id="5MP9">
    <property type="method" value="EM"/>
    <property type="resolution" value="4.10 A"/>
    <property type="chains" value="3/j=1-205"/>
</dbReference>
<dbReference type="PDB" id="5MPA">
    <property type="method" value="EM"/>
    <property type="resolution" value="4.50 A"/>
    <property type="chains" value="3/j=1-205"/>
</dbReference>
<dbReference type="PDB" id="5MPB">
    <property type="method" value="EM"/>
    <property type="resolution" value="7.80 A"/>
    <property type="chains" value="3/j=1-205"/>
</dbReference>
<dbReference type="PDB" id="5MPC">
    <property type="method" value="EM"/>
    <property type="resolution" value="7.70 A"/>
    <property type="chains" value="3/j=1-205"/>
</dbReference>
<dbReference type="PDB" id="5NIF">
    <property type="method" value="X-ray"/>
    <property type="resolution" value="3.00 A"/>
    <property type="chains" value="J/X=1-205"/>
</dbReference>
<dbReference type="PDB" id="5WVI">
    <property type="method" value="EM"/>
    <property type="resolution" value="6.30 A"/>
    <property type="chains" value="3/h=1-205"/>
</dbReference>
<dbReference type="PDB" id="5WVK">
    <property type="method" value="EM"/>
    <property type="resolution" value="4.20 A"/>
    <property type="chains" value="3/h=1-205"/>
</dbReference>
<dbReference type="PDB" id="6EF3">
    <property type="method" value="EM"/>
    <property type="resolution" value="4.17 A"/>
    <property type="chains" value="3=1-205"/>
</dbReference>
<dbReference type="PDB" id="6FVT">
    <property type="method" value="EM"/>
    <property type="resolution" value="4.10 A"/>
    <property type="chains" value="3/j=2-205"/>
</dbReference>
<dbReference type="PDB" id="6FVU">
    <property type="method" value="EM"/>
    <property type="resolution" value="4.50 A"/>
    <property type="chains" value="3/j=2-205"/>
</dbReference>
<dbReference type="PDB" id="6FVV">
    <property type="method" value="EM"/>
    <property type="resolution" value="5.40 A"/>
    <property type="chains" value="3/j=2-205"/>
</dbReference>
<dbReference type="PDB" id="6FVW">
    <property type="method" value="EM"/>
    <property type="resolution" value="4.50 A"/>
    <property type="chains" value="3/j=2-205"/>
</dbReference>
<dbReference type="PDB" id="6FVX">
    <property type="method" value="EM"/>
    <property type="resolution" value="4.90 A"/>
    <property type="chains" value="3/j=2-205"/>
</dbReference>
<dbReference type="PDB" id="6FVY">
    <property type="method" value="EM"/>
    <property type="resolution" value="6.10 A"/>
    <property type="chains" value="3/j=2-205"/>
</dbReference>
<dbReference type="PDB" id="6G7F">
    <property type="method" value="X-ray"/>
    <property type="resolution" value="2.70 A"/>
    <property type="chains" value="I/W=1-205"/>
</dbReference>
<dbReference type="PDB" id="6G8M">
    <property type="method" value="X-ray"/>
    <property type="resolution" value="2.70 A"/>
    <property type="chains" value="I/W=1-205"/>
</dbReference>
<dbReference type="PDB" id="6G8N">
    <property type="method" value="X-ray"/>
    <property type="resolution" value="3.00 A"/>
    <property type="chains" value="I/W=1-205"/>
</dbReference>
<dbReference type="PDB" id="6GOP">
    <property type="method" value="X-ray"/>
    <property type="resolution" value="2.90 A"/>
    <property type="chains" value="I/W=1-205"/>
</dbReference>
<dbReference type="PDB" id="6H39">
    <property type="method" value="X-ray"/>
    <property type="resolution" value="2.50 A"/>
    <property type="chains" value="I/W=1-205"/>
</dbReference>
<dbReference type="PDB" id="6HTB">
    <property type="method" value="X-ray"/>
    <property type="resolution" value="2.70 A"/>
    <property type="chains" value="I/W=1-205"/>
</dbReference>
<dbReference type="PDB" id="6HTC">
    <property type="method" value="X-ray"/>
    <property type="resolution" value="2.80 A"/>
    <property type="chains" value="I/W=1-205"/>
</dbReference>
<dbReference type="PDB" id="6HTD">
    <property type="method" value="X-ray"/>
    <property type="resolution" value="3.00 A"/>
    <property type="chains" value="I/W=1-205"/>
</dbReference>
<dbReference type="PDB" id="6HTP">
    <property type="method" value="X-ray"/>
    <property type="resolution" value="3.00 A"/>
    <property type="chains" value="I/W=1-205"/>
</dbReference>
<dbReference type="PDB" id="6HTR">
    <property type="method" value="X-ray"/>
    <property type="resolution" value="2.60 A"/>
    <property type="chains" value="I/W=1-205"/>
</dbReference>
<dbReference type="PDB" id="6HUB">
    <property type="method" value="X-ray"/>
    <property type="resolution" value="2.90 A"/>
    <property type="chains" value="I/W=1-205"/>
</dbReference>
<dbReference type="PDB" id="6HUC">
    <property type="method" value="X-ray"/>
    <property type="resolution" value="3.00 A"/>
    <property type="chains" value="I/W=1-205"/>
</dbReference>
<dbReference type="PDB" id="6HUQ">
    <property type="method" value="X-ray"/>
    <property type="resolution" value="3.00 A"/>
    <property type="chains" value="I/W=1-205"/>
</dbReference>
<dbReference type="PDB" id="6HUU">
    <property type="method" value="X-ray"/>
    <property type="resolution" value="2.80 A"/>
    <property type="chains" value="I/W=1-205"/>
</dbReference>
<dbReference type="PDB" id="6HUV">
    <property type="method" value="X-ray"/>
    <property type="resolution" value="3.10 A"/>
    <property type="chains" value="I/W=1-205"/>
</dbReference>
<dbReference type="PDB" id="6HV3">
    <property type="method" value="X-ray"/>
    <property type="resolution" value="2.70 A"/>
    <property type="chains" value="I/W=1-205"/>
</dbReference>
<dbReference type="PDB" id="6HV4">
    <property type="method" value="X-ray"/>
    <property type="resolution" value="3.00 A"/>
    <property type="chains" value="I/W=1-205"/>
</dbReference>
<dbReference type="PDB" id="6HV5">
    <property type="method" value="X-ray"/>
    <property type="resolution" value="3.00 A"/>
    <property type="chains" value="I/W=1-205"/>
</dbReference>
<dbReference type="PDB" id="6HV7">
    <property type="method" value="X-ray"/>
    <property type="resolution" value="3.40 A"/>
    <property type="chains" value="I/W=1-205"/>
</dbReference>
<dbReference type="PDB" id="6HVA">
    <property type="method" value="X-ray"/>
    <property type="resolution" value="2.90 A"/>
    <property type="chains" value="I/W=1-205"/>
</dbReference>
<dbReference type="PDB" id="6HVR">
    <property type="method" value="X-ray"/>
    <property type="resolution" value="2.70 A"/>
    <property type="chains" value="I/W=1-205"/>
</dbReference>
<dbReference type="PDB" id="6HVS">
    <property type="method" value="X-ray"/>
    <property type="resolution" value="3.10 A"/>
    <property type="chains" value="I/W=1-205"/>
</dbReference>
<dbReference type="PDB" id="6HVT">
    <property type="method" value="X-ray"/>
    <property type="resolution" value="2.90 A"/>
    <property type="chains" value="I/W=1-205"/>
</dbReference>
<dbReference type="PDB" id="6HVU">
    <property type="method" value="X-ray"/>
    <property type="resolution" value="2.90 A"/>
    <property type="chains" value="I/W=1-205"/>
</dbReference>
<dbReference type="PDB" id="6HVV">
    <property type="method" value="X-ray"/>
    <property type="resolution" value="2.70 A"/>
    <property type="chains" value="I/W=1-205"/>
</dbReference>
<dbReference type="PDB" id="6HVW">
    <property type="method" value="X-ray"/>
    <property type="resolution" value="3.00 A"/>
    <property type="chains" value="I/W=1-205"/>
</dbReference>
<dbReference type="PDB" id="6HVX">
    <property type="method" value="X-ray"/>
    <property type="resolution" value="2.80 A"/>
    <property type="chains" value="I/W=1-205"/>
</dbReference>
<dbReference type="PDB" id="6HVY">
    <property type="method" value="X-ray"/>
    <property type="resolution" value="2.70 A"/>
    <property type="chains" value="I/W=1-205"/>
</dbReference>
<dbReference type="PDB" id="6HW0">
    <property type="method" value="X-ray"/>
    <property type="resolution" value="2.80 A"/>
    <property type="chains" value="I/W=1-205"/>
</dbReference>
<dbReference type="PDB" id="6HW3">
    <property type="method" value="X-ray"/>
    <property type="resolution" value="2.60 A"/>
    <property type="chains" value="I/W=1-205"/>
</dbReference>
<dbReference type="PDB" id="6HW4">
    <property type="method" value="X-ray"/>
    <property type="resolution" value="2.90 A"/>
    <property type="chains" value="I/W=1-205"/>
</dbReference>
<dbReference type="PDB" id="6HW5">
    <property type="method" value="X-ray"/>
    <property type="resolution" value="2.90 A"/>
    <property type="chains" value="I/W=1-205"/>
</dbReference>
<dbReference type="PDB" id="6HW6">
    <property type="method" value="X-ray"/>
    <property type="resolution" value="2.70 A"/>
    <property type="chains" value="I/W=1-205"/>
</dbReference>
<dbReference type="PDB" id="6HW7">
    <property type="method" value="X-ray"/>
    <property type="resolution" value="2.70 A"/>
    <property type="chains" value="I/W=1-205"/>
</dbReference>
<dbReference type="PDB" id="6HW8">
    <property type="method" value="X-ray"/>
    <property type="resolution" value="2.80 A"/>
    <property type="chains" value="I/W=1-205"/>
</dbReference>
<dbReference type="PDB" id="6HW9">
    <property type="method" value="X-ray"/>
    <property type="resolution" value="2.80 A"/>
    <property type="chains" value="I/W=1-205"/>
</dbReference>
<dbReference type="PDB" id="6HWA">
    <property type="method" value="X-ray"/>
    <property type="resolution" value="2.80 A"/>
    <property type="chains" value="I/W=1-205"/>
</dbReference>
<dbReference type="PDB" id="6HWB">
    <property type="method" value="X-ray"/>
    <property type="resolution" value="2.60 A"/>
    <property type="chains" value="I/W=1-205"/>
</dbReference>
<dbReference type="PDB" id="6HWC">
    <property type="method" value="X-ray"/>
    <property type="resolution" value="2.80 A"/>
    <property type="chains" value="I/W=1-205"/>
</dbReference>
<dbReference type="PDB" id="6HWD">
    <property type="method" value="X-ray"/>
    <property type="resolution" value="2.80 A"/>
    <property type="chains" value="I/W=1-205"/>
</dbReference>
<dbReference type="PDB" id="6HWE">
    <property type="method" value="X-ray"/>
    <property type="resolution" value="2.30 A"/>
    <property type="chains" value="I/W=1-205"/>
</dbReference>
<dbReference type="PDB" id="6HWF">
    <property type="method" value="X-ray"/>
    <property type="resolution" value="2.50 A"/>
    <property type="chains" value="I/W=1-205"/>
</dbReference>
<dbReference type="PDB" id="6J2C">
    <property type="method" value="EM"/>
    <property type="resolution" value="7.00 A"/>
    <property type="chains" value="3/h=1-205"/>
</dbReference>
<dbReference type="PDB" id="6J2N">
    <property type="method" value="EM"/>
    <property type="resolution" value="7.50 A"/>
    <property type="chains" value="3/h=1-205"/>
</dbReference>
<dbReference type="PDB" id="6J2Q">
    <property type="method" value="EM"/>
    <property type="resolution" value="3.80 A"/>
    <property type="chains" value="3/h=1-205"/>
</dbReference>
<dbReference type="PDB" id="6J2X">
    <property type="method" value="EM"/>
    <property type="resolution" value="3.80 A"/>
    <property type="chains" value="3/h=1-205"/>
</dbReference>
<dbReference type="PDB" id="6J30">
    <property type="method" value="EM"/>
    <property type="resolution" value="4.50 A"/>
    <property type="chains" value="3/h=1-205"/>
</dbReference>
<dbReference type="PDB" id="6ZOU">
    <property type="method" value="X-ray"/>
    <property type="resolution" value="2.90 A"/>
    <property type="chains" value="I/W=1-205"/>
</dbReference>
<dbReference type="PDB" id="6ZP6">
    <property type="method" value="X-ray"/>
    <property type="resolution" value="2.80 A"/>
    <property type="chains" value="I/W=1-205"/>
</dbReference>
<dbReference type="PDB" id="6ZP8">
    <property type="method" value="X-ray"/>
    <property type="resolution" value="3.00 A"/>
    <property type="chains" value="I/W=1-205"/>
</dbReference>
<dbReference type="PDB" id="7LS5">
    <property type="method" value="EM"/>
    <property type="resolution" value="2.74 A"/>
    <property type="chains" value="J/X=1-205"/>
</dbReference>
<dbReference type="PDB" id="7LS6">
    <property type="method" value="EM"/>
    <property type="resolution" value="3.17 A"/>
    <property type="chains" value="J=1-205"/>
</dbReference>
<dbReference type="PDB" id="7LSX">
    <property type="method" value="EM"/>
    <property type="resolution" value="3.61 A"/>
    <property type="chains" value="J=1-205"/>
</dbReference>
<dbReference type="PDB" id="7O2L">
    <property type="method" value="X-ray"/>
    <property type="resolution" value="3.00 A"/>
    <property type="chains" value="I/W=1-205"/>
</dbReference>
<dbReference type="PDB" id="7QO3">
    <property type="method" value="EM"/>
    <property type="resolution" value="6.10 A"/>
    <property type="chains" value="3/j=1-205"/>
</dbReference>
<dbReference type="PDB" id="7QO5">
    <property type="method" value="EM"/>
    <property type="resolution" value="6.00 A"/>
    <property type="chains" value="3/j=1-205"/>
</dbReference>
<dbReference type="PDB" id="7TEJ">
    <property type="method" value="EM"/>
    <property type="resolution" value="2.74 A"/>
    <property type="chains" value="J/X=1-205"/>
</dbReference>
<dbReference type="PDB" id="7TEO">
    <property type="method" value="EM"/>
    <property type="resolution" value="2.97 A"/>
    <property type="chains" value="J/X=1-205"/>
</dbReference>
<dbReference type="PDB" id="8BW1">
    <property type="method" value="X-ray"/>
    <property type="resolution" value="3.25 A"/>
    <property type="chains" value="I/W=1-205"/>
</dbReference>
<dbReference type="PDB" id="8OHZ">
    <property type="method" value="X-ray"/>
    <property type="resolution" value="2.65 A"/>
    <property type="chains" value="I/W=1-205"/>
</dbReference>
<dbReference type="PDB" id="8OI1">
    <property type="method" value="X-ray"/>
    <property type="resolution" value="2.95 A"/>
    <property type="chains" value="I/W=1-205"/>
</dbReference>
<dbReference type="PDB" id="8OLR">
    <property type="method" value="X-ray"/>
    <property type="resolution" value="2.80 A"/>
    <property type="chains" value="I/W=1-205"/>
</dbReference>
<dbReference type="PDB" id="8RHJ">
    <property type="method" value="X-ray"/>
    <property type="resolution" value="3.05 A"/>
    <property type="chains" value="I/W=1-205"/>
</dbReference>
<dbReference type="PDB" id="8RHK">
    <property type="method" value="X-ray"/>
    <property type="resolution" value="2.80 A"/>
    <property type="chains" value="I/W=1-205"/>
</dbReference>
<dbReference type="PDB" id="8RHL">
    <property type="method" value="X-ray"/>
    <property type="resolution" value="3.20 A"/>
    <property type="chains" value="I/W=1-205"/>
</dbReference>
<dbReference type="PDB" id="8RVL">
    <property type="method" value="EM"/>
    <property type="resolution" value="2.14 A"/>
    <property type="chains" value="J/X=1-205"/>
</dbReference>
<dbReference type="PDB" id="8RVO">
    <property type="method" value="EM"/>
    <property type="resolution" value="2.69 A"/>
    <property type="chains" value="J/X=1-205"/>
</dbReference>
<dbReference type="PDB" id="8RVP">
    <property type="method" value="EM"/>
    <property type="resolution" value="2.28 A"/>
    <property type="chains" value="J/X=1-205"/>
</dbReference>
<dbReference type="PDB" id="8RVQ">
    <property type="method" value="EM"/>
    <property type="resolution" value="2.02 A"/>
    <property type="chains" value="J/X=1-205"/>
</dbReference>
<dbReference type="PDB" id="8T08">
    <property type="method" value="EM"/>
    <property type="resolution" value="3.00 A"/>
    <property type="chains" value="J/a=1-205"/>
</dbReference>
<dbReference type="PDB" id="8T0M">
    <property type="method" value="EM"/>
    <property type="resolution" value="2.40 A"/>
    <property type="chains" value="J/X=1-205"/>
</dbReference>
<dbReference type="PDB" id="8U6Y">
    <property type="method" value="EM"/>
    <property type="resolution" value="2.80 A"/>
    <property type="chains" value="J/a=1-204"/>
</dbReference>
<dbReference type="PDB" id="8U7U">
    <property type="method" value="EM"/>
    <property type="resolution" value="2.16 A"/>
    <property type="chains" value="J/X=1-204"/>
</dbReference>
<dbReference type="PDB" id="9D0T">
    <property type="method" value="EM"/>
    <property type="resolution" value="2.84 A"/>
    <property type="chains" value="J=1-205"/>
</dbReference>
<dbReference type="PDB" id="9EY9">
    <property type="method" value="X-ray"/>
    <property type="resolution" value="3.10 A"/>
    <property type="chains" value="I/W=1-205"/>
</dbReference>
<dbReference type="PDB" id="9FST">
    <property type="method" value="X-ray"/>
    <property type="resolution" value="2.75 A"/>
    <property type="chains" value="I/W=1-205"/>
</dbReference>
<dbReference type="PDB" id="9FSV">
    <property type="method" value="X-ray"/>
    <property type="resolution" value="2.75 A"/>
    <property type="chains" value="I/W=1-205"/>
</dbReference>
<dbReference type="PDB" id="9FT0">
    <property type="method" value="X-ray"/>
    <property type="resolution" value="2.75 A"/>
    <property type="chains" value="I/W=1-205"/>
</dbReference>
<dbReference type="PDB" id="9FT1">
    <property type="method" value="X-ray"/>
    <property type="resolution" value="2.60 A"/>
    <property type="chains" value="I/W=1-205"/>
</dbReference>
<dbReference type="PDB" id="9GBK">
    <property type="method" value="EM"/>
    <property type="resolution" value="2.39 A"/>
    <property type="chains" value="J/X=1-205"/>
</dbReference>
<dbReference type="PDBsum" id="1FNT"/>
<dbReference type="PDBsum" id="1G0U"/>
<dbReference type="PDBsum" id="1G65"/>
<dbReference type="PDBsum" id="1JD2"/>
<dbReference type="PDBsum" id="1RYP"/>
<dbReference type="PDBsum" id="1Z7Q"/>
<dbReference type="PDBsum" id="2F16"/>
<dbReference type="PDBsum" id="2FAK"/>
<dbReference type="PDBsum" id="2GPL"/>
<dbReference type="PDBsum" id="2ZCY"/>
<dbReference type="PDBsum" id="3BDM"/>
<dbReference type="PDBsum" id="3D29"/>
<dbReference type="PDBsum" id="3DY3"/>
<dbReference type="PDBsum" id="3DY4"/>
<dbReference type="PDBsum" id="3E47"/>
<dbReference type="PDBsum" id="3GPJ"/>
<dbReference type="PDBsum" id="3GPT"/>
<dbReference type="PDBsum" id="3GPW"/>
<dbReference type="PDBsum" id="3HYE"/>
<dbReference type="PDBsum" id="3JCO"/>
<dbReference type="PDBsum" id="3JCP"/>
<dbReference type="PDBsum" id="3MG0"/>
<dbReference type="PDBsum" id="3MG4"/>
<dbReference type="PDBsum" id="3MG6"/>
<dbReference type="PDBsum" id="3MG7"/>
<dbReference type="PDBsum" id="3MG8"/>
<dbReference type="PDBsum" id="3NZJ"/>
<dbReference type="PDBsum" id="3NZW"/>
<dbReference type="PDBsum" id="3NZX"/>
<dbReference type="PDBsum" id="3OEU"/>
<dbReference type="PDBsum" id="3OEV"/>
<dbReference type="PDBsum" id="3OKJ"/>
<dbReference type="PDBsum" id="3SDI"/>
<dbReference type="PDBsum" id="3SDK"/>
<dbReference type="PDBsum" id="3SHJ"/>
<dbReference type="PDBsum" id="3TDD"/>
<dbReference type="PDBsum" id="3UN4"/>
<dbReference type="PDBsum" id="3UN8"/>
<dbReference type="PDBsum" id="3WXR"/>
<dbReference type="PDBsum" id="4CR2"/>
<dbReference type="PDBsum" id="4CR3"/>
<dbReference type="PDBsum" id="4CR4"/>
<dbReference type="PDBsum" id="4EU2"/>
<dbReference type="PDBsum" id="4FZC"/>
<dbReference type="PDBsum" id="4FZG"/>
<dbReference type="PDBsum" id="4G4S"/>
<dbReference type="PDBsum" id="4GK7"/>
<dbReference type="PDBsum" id="4HNP"/>
<dbReference type="PDBsum" id="4HRC"/>
<dbReference type="PDBsum" id="4HRD"/>
<dbReference type="PDBsum" id="4INR"/>
<dbReference type="PDBsum" id="4INT"/>
<dbReference type="PDBsum" id="4INU"/>
<dbReference type="PDBsum" id="4J70"/>
<dbReference type="PDBsum" id="4JSQ"/>
<dbReference type="PDBsum" id="4JSU"/>
<dbReference type="PDBsum" id="4JT0"/>
<dbReference type="PDBsum" id="4LQI"/>
<dbReference type="PDBsum" id="4LTC"/>
<dbReference type="PDBsum" id="4NNN"/>
<dbReference type="PDBsum" id="4NNW"/>
<dbReference type="PDBsum" id="4NO1"/>
<dbReference type="PDBsum" id="4NO6"/>
<dbReference type="PDBsum" id="4NO8"/>
<dbReference type="PDBsum" id="4NO9"/>
<dbReference type="PDBsum" id="4Q1S"/>
<dbReference type="PDBsum" id="4QBY"/>
<dbReference type="PDBsum" id="4QLQ"/>
<dbReference type="PDBsum" id="4QLS"/>
<dbReference type="PDBsum" id="4QLT"/>
<dbReference type="PDBsum" id="4QLU"/>
<dbReference type="PDBsum" id="4QLV"/>
<dbReference type="PDBsum" id="4QUX"/>
<dbReference type="PDBsum" id="4QUY"/>
<dbReference type="PDBsum" id="4QV0"/>
<dbReference type="PDBsum" id="4QV1"/>
<dbReference type="PDBsum" id="4QV3"/>
<dbReference type="PDBsum" id="4QV4"/>
<dbReference type="PDBsum" id="4QV5"/>
<dbReference type="PDBsum" id="4QV6"/>
<dbReference type="PDBsum" id="4QV7"/>
<dbReference type="PDBsum" id="4QV8"/>
<dbReference type="PDBsum" id="4QV9"/>
<dbReference type="PDBsum" id="4QVL"/>
<dbReference type="PDBsum" id="4QVM"/>
<dbReference type="PDBsum" id="4QVN"/>
<dbReference type="PDBsum" id="4QVP"/>
<dbReference type="PDBsum" id="4QVQ"/>
<dbReference type="PDBsum" id="4QVV"/>
<dbReference type="PDBsum" id="4QVW"/>
<dbReference type="PDBsum" id="4QVY"/>
<dbReference type="PDBsum" id="4QW0"/>
<dbReference type="PDBsum" id="4QW1"/>
<dbReference type="PDBsum" id="4QW3"/>
<dbReference type="PDBsum" id="4QW4"/>
<dbReference type="PDBsum" id="4QW5"/>
<dbReference type="PDBsum" id="4QW6"/>
<dbReference type="PDBsum" id="4QW7"/>
<dbReference type="PDBsum" id="4QWF"/>
<dbReference type="PDBsum" id="4QWG"/>
<dbReference type="PDBsum" id="4QWI"/>
<dbReference type="PDBsum" id="4QWJ"/>
<dbReference type="PDBsum" id="4QWK"/>
<dbReference type="PDBsum" id="4QWL"/>
<dbReference type="PDBsum" id="4QWR"/>
<dbReference type="PDBsum" id="4QWS"/>
<dbReference type="PDBsum" id="4QWU"/>
<dbReference type="PDBsum" id="4QWX"/>
<dbReference type="PDBsum" id="4QXJ"/>
<dbReference type="PDBsum" id="4QZ0"/>
<dbReference type="PDBsum" id="4QZ1"/>
<dbReference type="PDBsum" id="4QZ2"/>
<dbReference type="PDBsum" id="4QZ3"/>
<dbReference type="PDBsum" id="4QZ4"/>
<dbReference type="PDBsum" id="4QZ5"/>
<dbReference type="PDBsum" id="4QZ6"/>
<dbReference type="PDBsum" id="4QZ7"/>
<dbReference type="PDBsum" id="4QZW"/>
<dbReference type="PDBsum" id="4QZX"/>
<dbReference type="PDBsum" id="4QZZ"/>
<dbReference type="PDBsum" id="4R00"/>
<dbReference type="PDBsum" id="4R02"/>
<dbReference type="PDBsum" id="4R17"/>
<dbReference type="PDBsum" id="4R18"/>
<dbReference type="PDBsum" id="4RUR"/>
<dbReference type="PDBsum" id="4V7O"/>
<dbReference type="PDBsum" id="4X6Z"/>
<dbReference type="PDBsum" id="4Y69"/>
<dbReference type="PDBsum" id="4Y6A"/>
<dbReference type="PDBsum" id="4Y6V"/>
<dbReference type="PDBsum" id="4Y6Z"/>
<dbReference type="PDBsum" id="4Y70"/>
<dbReference type="PDBsum" id="4Y74"/>
<dbReference type="PDBsum" id="4Y75"/>
<dbReference type="PDBsum" id="4Y77"/>
<dbReference type="PDBsum" id="4Y78"/>
<dbReference type="PDBsum" id="4Y7W"/>
<dbReference type="PDBsum" id="4Y7X"/>
<dbReference type="PDBsum" id="4Y7Y"/>
<dbReference type="PDBsum" id="4Y80"/>
<dbReference type="PDBsum" id="4Y81"/>
<dbReference type="PDBsum" id="4Y82"/>
<dbReference type="PDBsum" id="4Y84"/>
<dbReference type="PDBsum" id="4Y8G"/>
<dbReference type="PDBsum" id="4Y8H"/>
<dbReference type="PDBsum" id="4Y8I"/>
<dbReference type="PDBsum" id="4Y8J"/>
<dbReference type="PDBsum" id="4Y8K"/>
<dbReference type="PDBsum" id="4Y8L"/>
<dbReference type="PDBsum" id="4Y8M"/>
<dbReference type="PDBsum" id="4Y8N"/>
<dbReference type="PDBsum" id="4Y8O"/>
<dbReference type="PDBsum" id="4Y8P"/>
<dbReference type="PDBsum" id="4Y8Q"/>
<dbReference type="PDBsum" id="4Y8R"/>
<dbReference type="PDBsum" id="4Y8S"/>
<dbReference type="PDBsum" id="4Y8T"/>
<dbReference type="PDBsum" id="4Y8U"/>
<dbReference type="PDBsum" id="4Y9Y"/>
<dbReference type="PDBsum" id="4Y9Z"/>
<dbReference type="PDBsum" id="4YA0"/>
<dbReference type="PDBsum" id="4YA1"/>
<dbReference type="PDBsum" id="4YA2"/>
<dbReference type="PDBsum" id="4YA3"/>
<dbReference type="PDBsum" id="4YA4"/>
<dbReference type="PDBsum" id="4YA5"/>
<dbReference type="PDBsum" id="4YA7"/>
<dbReference type="PDBsum" id="4YA9"/>
<dbReference type="PDBsum" id="4Z1L"/>
<dbReference type="PDBsum" id="5A5B"/>
<dbReference type="PDBsum" id="5AHJ"/>
<dbReference type="PDBsum" id="5BOU"/>
<dbReference type="PDBsum" id="5BXL"/>
<dbReference type="PDBsum" id="5BXN"/>
<dbReference type="PDBsum" id="5CGF"/>
<dbReference type="PDBsum" id="5CGG"/>
<dbReference type="PDBsum" id="5CGH"/>
<dbReference type="PDBsum" id="5CGI"/>
<dbReference type="PDBsum" id="5CZ4"/>
<dbReference type="PDBsum" id="5CZ5"/>
<dbReference type="PDBsum" id="5CZ6"/>
<dbReference type="PDBsum" id="5CZ7"/>
<dbReference type="PDBsum" id="5CZ8"/>
<dbReference type="PDBsum" id="5CZ9"/>
<dbReference type="PDBsum" id="5CZA"/>
<dbReference type="PDBsum" id="5D0S"/>
<dbReference type="PDBsum" id="5D0T"/>
<dbReference type="PDBsum" id="5D0V"/>
<dbReference type="PDBsum" id="5D0W"/>
<dbReference type="PDBsum" id="5D0X"/>
<dbReference type="PDBsum" id="5D0Z"/>
<dbReference type="PDBsum" id="5DKI"/>
<dbReference type="PDBsum" id="5DKJ"/>
<dbReference type="PDBsum" id="5FG7"/>
<dbReference type="PDBsum" id="5FG9"/>
<dbReference type="PDBsum" id="5FGA"/>
<dbReference type="PDBsum" id="5FGD"/>
<dbReference type="PDBsum" id="5FGE"/>
<dbReference type="PDBsum" id="5FGF"/>
<dbReference type="PDBsum" id="5FGG"/>
<dbReference type="PDBsum" id="5FGH"/>
<dbReference type="PDBsum" id="5FGI"/>
<dbReference type="PDBsum" id="5FHS"/>
<dbReference type="PDBsum" id="5JHR"/>
<dbReference type="PDBsum" id="5JHS"/>
<dbReference type="PDBsum" id="5L52"/>
<dbReference type="PDBsum" id="5L54"/>
<dbReference type="PDBsum" id="5L55"/>
<dbReference type="PDBsum" id="5L5A"/>
<dbReference type="PDBsum" id="5L5B"/>
<dbReference type="PDBsum" id="5L5D"/>
<dbReference type="PDBsum" id="5L5E"/>
<dbReference type="PDBsum" id="5L5F"/>
<dbReference type="PDBsum" id="5L5H"/>
<dbReference type="PDBsum" id="5L5I"/>
<dbReference type="PDBsum" id="5L5J"/>
<dbReference type="PDBsum" id="5L5O"/>
<dbReference type="PDBsum" id="5L5P"/>
<dbReference type="PDBsum" id="5L5Q"/>
<dbReference type="PDBsum" id="5L5R"/>
<dbReference type="PDBsum" id="5L5S"/>
<dbReference type="PDBsum" id="5L5T"/>
<dbReference type="PDBsum" id="5L5U"/>
<dbReference type="PDBsum" id="5L5V"/>
<dbReference type="PDBsum" id="5L5W"/>
<dbReference type="PDBsum" id="5L5X"/>
<dbReference type="PDBsum" id="5L5Y"/>
<dbReference type="PDBsum" id="5L5Z"/>
<dbReference type="PDBsum" id="5L60"/>
<dbReference type="PDBsum" id="5L61"/>
<dbReference type="PDBsum" id="5L62"/>
<dbReference type="PDBsum" id="5L63"/>
<dbReference type="PDBsum" id="5L64"/>
<dbReference type="PDBsum" id="5L65"/>
<dbReference type="PDBsum" id="5L66"/>
<dbReference type="PDBsum" id="5L67"/>
<dbReference type="PDBsum" id="5L68"/>
<dbReference type="PDBsum" id="5L69"/>
<dbReference type="PDBsum" id="5L6A"/>
<dbReference type="PDBsum" id="5L6B"/>
<dbReference type="PDBsum" id="5L6C"/>
<dbReference type="PDBsum" id="5LAI"/>
<dbReference type="PDBsum" id="5LAJ"/>
<dbReference type="PDBsum" id="5LTT"/>
<dbReference type="PDBsum" id="5M2B"/>
<dbReference type="PDBsum" id="5MP9"/>
<dbReference type="PDBsum" id="5MPA"/>
<dbReference type="PDBsum" id="5MPB"/>
<dbReference type="PDBsum" id="5MPC"/>
<dbReference type="PDBsum" id="5NIF"/>
<dbReference type="PDBsum" id="5WVI"/>
<dbReference type="PDBsum" id="5WVK"/>
<dbReference type="PDBsum" id="6EF3"/>
<dbReference type="PDBsum" id="6FVT"/>
<dbReference type="PDBsum" id="6FVU"/>
<dbReference type="PDBsum" id="6FVV"/>
<dbReference type="PDBsum" id="6FVW"/>
<dbReference type="PDBsum" id="6FVX"/>
<dbReference type="PDBsum" id="6FVY"/>
<dbReference type="PDBsum" id="6G7F"/>
<dbReference type="PDBsum" id="6G8M"/>
<dbReference type="PDBsum" id="6G8N"/>
<dbReference type="PDBsum" id="6GOP"/>
<dbReference type="PDBsum" id="6H39"/>
<dbReference type="PDBsum" id="6HTB"/>
<dbReference type="PDBsum" id="6HTC"/>
<dbReference type="PDBsum" id="6HTD"/>
<dbReference type="PDBsum" id="6HTP"/>
<dbReference type="PDBsum" id="6HTR"/>
<dbReference type="PDBsum" id="6HUB"/>
<dbReference type="PDBsum" id="6HUC"/>
<dbReference type="PDBsum" id="6HUQ"/>
<dbReference type="PDBsum" id="6HUU"/>
<dbReference type="PDBsum" id="6HUV"/>
<dbReference type="PDBsum" id="6HV3"/>
<dbReference type="PDBsum" id="6HV4"/>
<dbReference type="PDBsum" id="6HV5"/>
<dbReference type="PDBsum" id="6HV7"/>
<dbReference type="PDBsum" id="6HVA"/>
<dbReference type="PDBsum" id="6HVR"/>
<dbReference type="PDBsum" id="6HVS"/>
<dbReference type="PDBsum" id="6HVT"/>
<dbReference type="PDBsum" id="6HVU"/>
<dbReference type="PDBsum" id="6HVV"/>
<dbReference type="PDBsum" id="6HVW"/>
<dbReference type="PDBsum" id="6HVX"/>
<dbReference type="PDBsum" id="6HVY"/>
<dbReference type="PDBsum" id="6HW0"/>
<dbReference type="PDBsum" id="6HW3"/>
<dbReference type="PDBsum" id="6HW4"/>
<dbReference type="PDBsum" id="6HW5"/>
<dbReference type="PDBsum" id="6HW6"/>
<dbReference type="PDBsum" id="6HW7"/>
<dbReference type="PDBsum" id="6HW8"/>
<dbReference type="PDBsum" id="6HW9"/>
<dbReference type="PDBsum" id="6HWA"/>
<dbReference type="PDBsum" id="6HWB"/>
<dbReference type="PDBsum" id="6HWC"/>
<dbReference type="PDBsum" id="6HWD"/>
<dbReference type="PDBsum" id="6HWE"/>
<dbReference type="PDBsum" id="6HWF"/>
<dbReference type="PDBsum" id="6J2C"/>
<dbReference type="PDBsum" id="6J2N"/>
<dbReference type="PDBsum" id="6J2Q"/>
<dbReference type="PDBsum" id="6J2X"/>
<dbReference type="PDBsum" id="6J30"/>
<dbReference type="PDBsum" id="6ZOU"/>
<dbReference type="PDBsum" id="6ZP6"/>
<dbReference type="PDBsum" id="6ZP8"/>
<dbReference type="PDBsum" id="7LS5"/>
<dbReference type="PDBsum" id="7LS6"/>
<dbReference type="PDBsum" id="7LSX"/>
<dbReference type="PDBsum" id="7O2L"/>
<dbReference type="PDBsum" id="7QO3"/>
<dbReference type="PDBsum" id="7QO5"/>
<dbReference type="PDBsum" id="7TEJ"/>
<dbReference type="PDBsum" id="7TEO"/>
<dbReference type="PDBsum" id="8BW1"/>
<dbReference type="PDBsum" id="8OHZ"/>
<dbReference type="PDBsum" id="8OI1"/>
<dbReference type="PDBsum" id="8OLR"/>
<dbReference type="PDBsum" id="8RHJ"/>
<dbReference type="PDBsum" id="8RHK"/>
<dbReference type="PDBsum" id="8RHL"/>
<dbReference type="PDBsum" id="8RVL"/>
<dbReference type="PDBsum" id="8RVO"/>
<dbReference type="PDBsum" id="8RVP"/>
<dbReference type="PDBsum" id="8RVQ"/>
<dbReference type="PDBsum" id="8T08"/>
<dbReference type="PDBsum" id="8T0M"/>
<dbReference type="PDBsum" id="8U6Y"/>
<dbReference type="PDBsum" id="8U7U"/>
<dbReference type="PDBsum" id="9D0T"/>
<dbReference type="PDBsum" id="9EY9"/>
<dbReference type="PDBsum" id="9FST"/>
<dbReference type="PDBsum" id="9FSV"/>
<dbReference type="PDBsum" id="9FT0"/>
<dbReference type="PDBsum" id="9FT1"/>
<dbReference type="PDBsum" id="9GBK"/>
<dbReference type="EMDB" id="EMD-14082"/>
<dbReference type="EMDB" id="EMD-19523"/>
<dbReference type="EMDB" id="EMD-19527"/>
<dbReference type="EMDB" id="EMD-19528"/>
<dbReference type="EMDB" id="EMD-19529"/>
<dbReference type="EMDB" id="EMD-23502"/>
<dbReference type="EMDB" id="EMD-23503"/>
<dbReference type="EMDB" id="EMD-23508"/>
<dbReference type="EMDB" id="EMD-25847"/>
<dbReference type="EMDB" id="EMD-25848"/>
<dbReference type="EMDB" id="EMD-3534"/>
<dbReference type="EMDB" id="EMD-3535"/>
<dbReference type="EMDB" id="EMD-3536"/>
<dbReference type="EMDB" id="EMD-3537"/>
<dbReference type="EMDB" id="EMD-40938"/>
<dbReference type="EMDB" id="EMD-40944"/>
<dbReference type="EMDB" id="EMD-41963"/>
<dbReference type="EMDB" id="EMD-41993"/>
<dbReference type="EMDB" id="EMD-4321"/>
<dbReference type="EMDB" id="EMD-4322"/>
<dbReference type="EMDB" id="EMD-4323"/>
<dbReference type="EMDB" id="EMD-4324"/>
<dbReference type="EMDB" id="EMD-46461"/>
<dbReference type="EMDB" id="EMD-51221"/>
<dbReference type="EMDB" id="EMD-6693"/>
<dbReference type="EMDB" id="EMD-6694"/>
<dbReference type="EMDB" id="EMD-9045"/>
<dbReference type="EMDB" id="EMD-9769"/>
<dbReference type="EMDB" id="EMD-9770"/>
<dbReference type="EMDB" id="EMD-9771"/>
<dbReference type="EMDB" id="EMD-9772"/>
<dbReference type="EMDB" id="EMD-9773"/>
<dbReference type="SMR" id="P25451"/>
<dbReference type="BioGRID" id="36840">
    <property type="interactions" value="454"/>
</dbReference>
<dbReference type="ComplexPortal" id="CPX-2262">
    <property type="entry name" value="26S proteasome complex"/>
</dbReference>
<dbReference type="DIP" id="DIP-2039N"/>
<dbReference type="FunCoup" id="P25451">
    <property type="interactions" value="1318"/>
</dbReference>
<dbReference type="IntAct" id="P25451">
    <property type="interactions" value="48"/>
</dbReference>
<dbReference type="MINT" id="P25451"/>
<dbReference type="STRING" id="4932.YER094C"/>
<dbReference type="iPTMnet" id="P25451"/>
<dbReference type="PaxDb" id="4932-YER094C"/>
<dbReference type="PeptideAtlas" id="P25451"/>
<dbReference type="EnsemblFungi" id="YER094C_mRNA">
    <property type="protein sequence ID" value="YER094C"/>
    <property type="gene ID" value="YER094C"/>
</dbReference>
<dbReference type="GeneID" id="856830"/>
<dbReference type="KEGG" id="sce:YER094C"/>
<dbReference type="AGR" id="SGD:S000000896"/>
<dbReference type="SGD" id="S000000896">
    <property type="gene designation" value="PUP3"/>
</dbReference>
<dbReference type="VEuPathDB" id="FungiDB:YER094C"/>
<dbReference type="eggNOG" id="KOG0180">
    <property type="taxonomic scope" value="Eukaryota"/>
</dbReference>
<dbReference type="GeneTree" id="ENSGT00550000074820"/>
<dbReference type="HOGENOM" id="CLU_035750_10_0_1"/>
<dbReference type="InParanoid" id="P25451"/>
<dbReference type="OMA" id="CSEQLYG"/>
<dbReference type="OrthoDB" id="204949at2759"/>
<dbReference type="BioCyc" id="YEAST:G3O-30261-MONOMER"/>
<dbReference type="Reactome" id="R-SCE-1236978">
    <property type="pathway name" value="Cross-presentation of soluble exogenous antigens (endosomes)"/>
</dbReference>
<dbReference type="Reactome" id="R-SCE-5668541">
    <property type="pathway name" value="TNFR2 non-canonical NF-kB pathway"/>
</dbReference>
<dbReference type="Reactome" id="R-SCE-5687128">
    <property type="pathway name" value="MAPK6/MAPK4 signaling"/>
</dbReference>
<dbReference type="Reactome" id="R-SCE-5689880">
    <property type="pathway name" value="Ub-specific processing proteases"/>
</dbReference>
<dbReference type="Reactome" id="R-SCE-68949">
    <property type="pathway name" value="Orc1 removal from chromatin"/>
</dbReference>
<dbReference type="Reactome" id="R-SCE-69017">
    <property type="pathway name" value="CDK-mediated phosphorylation and removal of Cdc6"/>
</dbReference>
<dbReference type="Reactome" id="R-SCE-69601">
    <property type="pathway name" value="Ubiquitin Mediated Degradation of Phosphorylated Cdc25A"/>
</dbReference>
<dbReference type="Reactome" id="R-SCE-8854050">
    <property type="pathway name" value="FBXL7 down-regulates AURKA during mitotic entry and in early mitosis"/>
</dbReference>
<dbReference type="Reactome" id="R-SCE-8948751">
    <property type="pathway name" value="Regulation of PTEN stability and activity"/>
</dbReference>
<dbReference type="Reactome" id="R-SCE-8951664">
    <property type="pathway name" value="Neddylation"/>
</dbReference>
<dbReference type="Reactome" id="R-SCE-9755511">
    <property type="pathway name" value="KEAP1-NFE2L2 pathway"/>
</dbReference>
<dbReference type="Reactome" id="R-SCE-983168">
    <property type="pathway name" value="Antigen processing: Ubiquitination &amp; Proteasome degradation"/>
</dbReference>
<dbReference type="Reactome" id="R-SCE-9907900">
    <property type="pathway name" value="Proteasome assembly"/>
</dbReference>
<dbReference type="BioGRID-ORCS" id="856830">
    <property type="hits" value="5 hits in 10 CRISPR screens"/>
</dbReference>
<dbReference type="EvolutionaryTrace" id="P25451"/>
<dbReference type="PRO" id="PR:P25451"/>
<dbReference type="Proteomes" id="UP000002311">
    <property type="component" value="Chromosome V"/>
</dbReference>
<dbReference type="RNAct" id="P25451">
    <property type="molecule type" value="protein"/>
</dbReference>
<dbReference type="GO" id="GO:0005829">
    <property type="term" value="C:cytosol"/>
    <property type="evidence" value="ECO:0000318"/>
    <property type="project" value="GO_Central"/>
</dbReference>
<dbReference type="GO" id="GO:0005634">
    <property type="term" value="C:nucleus"/>
    <property type="evidence" value="ECO:0007005"/>
    <property type="project" value="SGD"/>
</dbReference>
<dbReference type="GO" id="GO:0000502">
    <property type="term" value="C:proteasome complex"/>
    <property type="evidence" value="ECO:0000353"/>
    <property type="project" value="ComplexPortal"/>
</dbReference>
<dbReference type="GO" id="GO:0019774">
    <property type="term" value="C:proteasome core complex, beta-subunit complex"/>
    <property type="evidence" value="ECO:0000314"/>
    <property type="project" value="SGD"/>
</dbReference>
<dbReference type="GO" id="GO:0061133">
    <property type="term" value="F:endopeptidase activator activity"/>
    <property type="evidence" value="ECO:0000316"/>
    <property type="project" value="SGD"/>
</dbReference>
<dbReference type="GO" id="GO:0010499">
    <property type="term" value="P:proteasomal ubiquitin-independent protein catabolic process"/>
    <property type="evidence" value="ECO:0000314"/>
    <property type="project" value="SGD"/>
</dbReference>
<dbReference type="GO" id="GO:0043161">
    <property type="term" value="P:proteasome-mediated ubiquitin-dependent protein catabolic process"/>
    <property type="evidence" value="ECO:0000314"/>
    <property type="project" value="SGD"/>
</dbReference>
<dbReference type="CDD" id="cd03759">
    <property type="entry name" value="proteasome_beta_type_3"/>
    <property type="match status" value="1"/>
</dbReference>
<dbReference type="FunFam" id="3.60.20.10:FF:000003">
    <property type="entry name" value="Proteasome subunit beta type-3"/>
    <property type="match status" value="1"/>
</dbReference>
<dbReference type="Gene3D" id="3.60.20.10">
    <property type="entry name" value="Glutamine Phosphoribosylpyrophosphate, subunit 1, domain 1"/>
    <property type="match status" value="1"/>
</dbReference>
<dbReference type="InterPro" id="IPR029055">
    <property type="entry name" value="Ntn_hydrolases_N"/>
</dbReference>
<dbReference type="InterPro" id="IPR033811">
    <property type="entry name" value="Proteasome_beta_3"/>
</dbReference>
<dbReference type="InterPro" id="IPR016050">
    <property type="entry name" value="Proteasome_bsu_CS"/>
</dbReference>
<dbReference type="InterPro" id="IPR001353">
    <property type="entry name" value="Proteasome_sua/b"/>
</dbReference>
<dbReference type="InterPro" id="IPR023333">
    <property type="entry name" value="Proteasome_suB-type"/>
</dbReference>
<dbReference type="PANTHER" id="PTHR32194">
    <property type="entry name" value="METALLOPROTEASE TLDD"/>
    <property type="match status" value="1"/>
</dbReference>
<dbReference type="PANTHER" id="PTHR32194:SF10">
    <property type="entry name" value="PROTEASOME SUBUNIT BETA TYPE-3"/>
    <property type="match status" value="1"/>
</dbReference>
<dbReference type="Pfam" id="PF00227">
    <property type="entry name" value="Proteasome"/>
    <property type="match status" value="1"/>
</dbReference>
<dbReference type="SUPFAM" id="SSF56235">
    <property type="entry name" value="N-terminal nucleophile aminohydrolases (Ntn hydrolases)"/>
    <property type="match status" value="1"/>
</dbReference>
<dbReference type="PROSITE" id="PS00854">
    <property type="entry name" value="PROTEASOME_BETA_1"/>
    <property type="match status" value="1"/>
</dbReference>
<dbReference type="PROSITE" id="PS51476">
    <property type="entry name" value="PROTEASOME_BETA_2"/>
    <property type="match status" value="1"/>
</dbReference>
<gene>
    <name type="primary">PUP3</name>
    <name type="ordered locus">YER094C</name>
</gene>
<accession>P25451</accession>
<accession>D3DM02</accession>